<comment type="function">
    <text evidence="16">Produces nitric oxide (NO) which is implicated in vascular smooth muscle relaxation through a cGMP-mediated signal transduction pathway (PubMed:1378832). NO mediates vascular endothelial growth factor (VEGF)-induced angiogenesis in coronary vessels and promotes blood clotting through the activation of platelets.</text>
</comment>
<comment type="function">
    <molecule>Isoform eNOS13C</molecule>
    <text>Lacks eNOS activity, dominant-negative form that may down-regulate eNOS activity by forming heterodimers with isoform 1.</text>
</comment>
<comment type="catalytic activity">
    <reaction evidence="16 27">
        <text>2 L-arginine + 3 NADPH + 4 O2 + H(+) = 2 L-citrulline + 2 nitric oxide + 3 NADP(+) + 4 H2O</text>
        <dbReference type="Rhea" id="RHEA:19897"/>
        <dbReference type="ChEBI" id="CHEBI:15377"/>
        <dbReference type="ChEBI" id="CHEBI:15378"/>
        <dbReference type="ChEBI" id="CHEBI:15379"/>
        <dbReference type="ChEBI" id="CHEBI:16480"/>
        <dbReference type="ChEBI" id="CHEBI:32682"/>
        <dbReference type="ChEBI" id="CHEBI:57743"/>
        <dbReference type="ChEBI" id="CHEBI:57783"/>
        <dbReference type="ChEBI" id="CHEBI:58349"/>
        <dbReference type="EC" id="1.14.13.39"/>
    </reaction>
    <physiologicalReaction direction="left-to-right" evidence="40">
        <dbReference type="Rhea" id="RHEA:19898"/>
    </physiologicalReaction>
</comment>
<comment type="cofactor">
    <cofactor evidence="26">
        <name>heme b</name>
        <dbReference type="ChEBI" id="CHEBI:60344"/>
    </cofactor>
</comment>
<comment type="cofactor">
    <cofactor evidence="3">
        <name>FAD</name>
        <dbReference type="ChEBI" id="CHEBI:57692"/>
    </cofactor>
    <text evidence="3">Binds 1 FAD.</text>
</comment>
<comment type="cofactor">
    <cofactor evidence="4">
        <name>FMN</name>
        <dbReference type="ChEBI" id="CHEBI:58210"/>
    </cofactor>
    <text evidence="4">Binds 1 FMN.</text>
</comment>
<comment type="cofactor">
    <cofactor evidence="26">
        <name>(6R)-L-erythro-5,6,7,8-tetrahydrobiopterin</name>
        <dbReference type="ChEBI" id="CHEBI:59560"/>
    </cofactor>
    <text evidence="26">Tetrahydrobiopterin (BH4). May stabilize the dimeric form of the enzyme.</text>
</comment>
<comment type="activity regulation">
    <text evidence="11 14">Stimulated by calcium/calmodulin. Inhibited by NOSIP and NOSTRIN.</text>
</comment>
<comment type="subunit">
    <text evidence="5 11 14 25">Homodimer. Interacts with NOSIP and NOSTRIN (PubMed:11149895, PubMed:12446846). Interacts with HSP90AB1 (By similarity) (PubMed:11149895, PubMed:12446846, PubMed:23585225). Forms a complex with ASL, ASS1 and SLC7A1; the complex regulates cell-autonomous L-arginine synthesis and citrulline recycling while channeling extracellular L-arginine to nitric oxide synthesis pathway (By similarity).</text>
</comment>
<comment type="interaction">
    <interactant intactId="EBI-1391623">
        <id>P29474</id>
    </interactant>
    <interactant intactId="EBI-353944">
        <id>P60709</id>
        <label>ACTB</label>
    </interactant>
    <organismsDiffer>false</organismsDiffer>
    <experiments>3</experiments>
</comment>
<comment type="interaction">
    <interactant intactId="EBI-1391623">
        <id>P29474</id>
    </interactant>
    <interactant intactId="EBI-11529439">
        <id>P63010-2</id>
        <label>AP2B1</label>
    </interactant>
    <organismsDiffer>false</organismsDiffer>
    <experiments>3</experiments>
</comment>
<comment type="interaction">
    <interactant intactId="EBI-1391623">
        <id>P29474</id>
    </interactant>
    <interactant intactId="EBI-10694449">
        <id>Q8N6T3-3</id>
        <label>ARFGAP1</label>
    </interactant>
    <organismsDiffer>false</organismsDiffer>
    <experiments>3</experiments>
</comment>
<comment type="interaction">
    <interactant intactId="EBI-1391623">
        <id>P29474</id>
    </interactant>
    <interactant intactId="EBI-14199987">
        <id>Q9Y575-3</id>
        <label>ASB3</label>
    </interactant>
    <organismsDiffer>false</organismsDiffer>
    <experiments>3</experiments>
</comment>
<comment type="interaction">
    <interactant intactId="EBI-1391623">
        <id>P29474</id>
    </interactant>
    <interactant intactId="EBI-9089489">
        <id>Q96FT7-4</id>
        <label>ASIC4</label>
    </interactant>
    <organismsDiffer>false</organismsDiffer>
    <experiments>3</experiments>
</comment>
<comment type="interaction">
    <interactant intactId="EBI-1391623">
        <id>P29474</id>
    </interactant>
    <interactant intactId="EBI-10697767">
        <id>Q5SZD1</id>
        <label>C6orf141</label>
    </interactant>
    <organismsDiffer>false</organismsDiffer>
    <experiments>3</experiments>
</comment>
<comment type="interaction">
    <interactant intactId="EBI-1391623">
        <id>P29474</id>
    </interactant>
    <interactant intactId="EBI-295634">
        <id>Q16543</id>
        <label>CDC37</label>
    </interactant>
    <organismsDiffer>false</organismsDiffer>
    <experiments>4</experiments>
</comment>
<comment type="interaction">
    <interactant intactId="EBI-1391623">
        <id>P29474</id>
    </interactant>
    <interactant intactId="EBI-350590">
        <id>Q9UNS2</id>
        <label>COPS3</label>
    </interactant>
    <organismsDiffer>false</organismsDiffer>
    <experiments>3</experiments>
</comment>
<comment type="interaction">
    <interactant intactId="EBI-1391623">
        <id>P29474</id>
    </interactant>
    <interactant intactId="EBI-2872414">
        <id>Q8IUI8</id>
        <label>CRLF3</label>
    </interactant>
    <organismsDiffer>false</organismsDiffer>
    <experiments>3</experiments>
</comment>
<comment type="interaction">
    <interactant intactId="EBI-1391623">
        <id>P29474</id>
    </interactant>
    <interactant intactId="EBI-491549">
        <id>P35222</id>
        <label>CTNNB1</label>
    </interactant>
    <organismsDiffer>false</organismsDiffer>
    <experiments>4</experiments>
</comment>
<comment type="interaction">
    <interactant intactId="EBI-1391623">
        <id>P29474</id>
    </interactant>
    <interactant intactId="EBI-713135">
        <id>Q05193</id>
        <label>DNM1</label>
    </interactant>
    <organismsDiffer>false</organismsDiffer>
    <experiments>2</experiments>
</comment>
<comment type="interaction">
    <interactant intactId="EBI-1391623">
        <id>P29474</id>
    </interactant>
    <interactant intactId="EBI-81610">
        <id>O15287</id>
        <label>FANCG</label>
    </interactant>
    <organismsDiffer>false</organismsDiffer>
    <experiments>3</experiments>
</comment>
<comment type="interaction">
    <interactant intactId="EBI-1391623">
        <id>P29474</id>
    </interactant>
    <interactant intactId="EBI-618309">
        <id>Q08379</id>
        <label>GOLGA2</label>
    </interactant>
    <organismsDiffer>false</organismsDiffer>
    <experiments>6</experiments>
</comment>
<comment type="interaction">
    <interactant intactId="EBI-1391623">
        <id>P29474</id>
    </interactant>
    <interactant intactId="EBI-750650">
        <id>Q71DI3</id>
        <label>H3C15</label>
    </interactant>
    <organismsDiffer>false</organismsDiffer>
    <experiments>3</experiments>
</comment>
<comment type="interaction">
    <interactant intactId="EBI-1391623">
        <id>P29474</id>
    </interactant>
    <interactant intactId="EBI-714680">
        <id>P69905</id>
        <label>HBA2</label>
    </interactant>
    <organismsDiffer>false</organismsDiffer>
    <experiments>2</experiments>
</comment>
<comment type="interaction">
    <interactant intactId="EBI-1391623">
        <id>P29474</id>
    </interactant>
    <interactant intactId="EBI-304185">
        <id>P61978</id>
        <label>HNRNPK</label>
    </interactant>
    <organismsDiffer>false</organismsDiffer>
    <experiments>3</experiments>
</comment>
<comment type="interaction">
    <interactant intactId="EBI-1391623">
        <id>P29474</id>
    </interactant>
    <interactant intactId="EBI-2806068">
        <id>Q12891</id>
        <label>HYAL2</label>
    </interactant>
    <organismsDiffer>false</organismsDiffer>
    <experiments>3</experiments>
</comment>
<comment type="interaction">
    <interactant intactId="EBI-1391623">
        <id>P29474</id>
    </interactant>
    <interactant intactId="EBI-747204">
        <id>Q9UKT9</id>
        <label>IKZF3</label>
    </interactant>
    <organismsDiffer>false</organismsDiffer>
    <experiments>3</experiments>
</comment>
<comment type="interaction">
    <interactant intactId="EBI-1391623">
        <id>P29474</id>
    </interactant>
    <interactant intactId="EBI-714379">
        <id>Q9Y2M5</id>
        <label>KLHL20</label>
    </interactant>
    <organismsDiffer>false</organismsDiffer>
    <experiments>3</experiments>
</comment>
<comment type="interaction">
    <interactant intactId="EBI-1391623">
        <id>P29474</id>
    </interactant>
    <interactant intactId="EBI-1049638">
        <id>Q14525</id>
        <label>KRT33B</label>
    </interactant>
    <organismsDiffer>false</organismsDiffer>
    <experiments>3</experiments>
</comment>
<comment type="interaction">
    <interactant intactId="EBI-1391623">
        <id>P29474</id>
    </interactant>
    <interactant intactId="EBI-9088829">
        <id>Q6DKI2</id>
        <label>LGALS9C</label>
    </interactant>
    <organismsDiffer>false</organismsDiffer>
    <experiments>3</experiments>
</comment>
<comment type="interaction">
    <interactant intactId="EBI-1391623">
        <id>P29474</id>
    </interactant>
    <interactant intactId="EBI-10178634">
        <id>P43364-2</id>
        <label>MAGEA11</label>
    </interactant>
    <organismsDiffer>false</organismsDiffer>
    <experiments>3</experiments>
</comment>
<comment type="interaction">
    <interactant intactId="EBI-1391623">
        <id>P29474</id>
    </interactant>
    <interactant intactId="EBI-8487781">
        <id>Q8N6F8</id>
        <label>METTL27</label>
    </interactant>
    <organismsDiffer>false</organismsDiffer>
    <experiments>3</experiments>
</comment>
<comment type="interaction">
    <interactant intactId="EBI-1391623">
        <id>P29474</id>
    </interactant>
    <interactant intactId="EBI-2804835">
        <id>O94851</id>
        <label>MICAL2</label>
    </interactant>
    <organismsDiffer>false</organismsDiffer>
    <experiments>3</experiments>
</comment>
<comment type="interaction">
    <interactant intactId="EBI-1391623">
        <id>P29474</id>
    </interactant>
    <interactant intactId="EBI-21250407">
        <id>A4FUJ8</id>
        <label>MKL1</label>
    </interactant>
    <organismsDiffer>false</organismsDiffer>
    <experiments>3</experiments>
</comment>
<comment type="interaction">
    <interactant intactId="EBI-1391623">
        <id>P29474</id>
    </interactant>
    <interactant intactId="EBI-2512452">
        <id>Q8N594</id>
        <label>MPND</label>
    </interactant>
    <organismsDiffer>false</organismsDiffer>
    <experiments>3</experiments>
</comment>
<comment type="interaction">
    <interactant intactId="EBI-1391623">
        <id>P29474</id>
    </interactant>
    <interactant intactId="EBI-1391643">
        <id>Q8IVI9</id>
        <label>NOSTRIN</label>
    </interactant>
    <organismsDiffer>false</organismsDiffer>
    <experiments>9</experiments>
</comment>
<comment type="interaction">
    <interactant intactId="EBI-1391623">
        <id>P29474</id>
    </interactant>
    <interactant intactId="EBI-25842707">
        <id>Q6X4W1-6</id>
        <label>NSMF</label>
    </interactant>
    <organismsDiffer>false</organismsDiffer>
    <experiments>3</experiments>
</comment>
<comment type="interaction">
    <interactant intactId="EBI-1391623">
        <id>P29474</id>
    </interactant>
    <interactant intactId="EBI-18577082">
        <id>O15381-5</id>
        <label>NVL</label>
    </interactant>
    <organismsDiffer>false</organismsDiffer>
    <experiments>3</experiments>
</comment>
<comment type="interaction">
    <interactant intactId="EBI-1391623">
        <id>P29474</id>
    </interactant>
    <interactant intactId="EBI-6309018">
        <id>Q9NV79</id>
        <label>PCMTD2</label>
    </interactant>
    <organismsDiffer>false</organismsDiffer>
    <experiments>3</experiments>
</comment>
<comment type="interaction">
    <interactant intactId="EBI-1391623">
        <id>P29474</id>
    </interactant>
    <interactant intactId="EBI-8059854">
        <id>Q16549</id>
        <label>PCSK7</label>
    </interactant>
    <organismsDiffer>false</organismsDiffer>
    <experiments>3</experiments>
</comment>
<comment type="interaction">
    <interactant intactId="EBI-1391623">
        <id>P29474</id>
    </interactant>
    <interactant intactId="EBI-349819">
        <id>Q5T2W1</id>
        <label>PDZK1</label>
    </interactant>
    <organismsDiffer>false</organismsDiffer>
    <experiments>3</experiments>
</comment>
<comment type="interaction">
    <interactant intactId="EBI-1391623">
        <id>P29474</id>
    </interactant>
    <interactant intactId="EBI-629434">
        <id>O75925</id>
        <label>PIAS1</label>
    </interactant>
    <organismsDiffer>false</organismsDiffer>
    <experiments>3</experiments>
</comment>
<comment type="interaction">
    <interactant intactId="EBI-1391623">
        <id>P29474</id>
    </interactant>
    <interactant intactId="EBI-710402">
        <id>Q96I34</id>
        <label>PPP1R16A</label>
    </interactant>
    <organismsDiffer>false</organismsDiffer>
    <experiments>3</experiments>
</comment>
<comment type="interaction">
    <interactant intactId="EBI-1391623">
        <id>P29474</id>
    </interactant>
    <interactant intactId="EBI-25835994">
        <id>Q6ZMI0-5</id>
        <label>PPP1R21</label>
    </interactant>
    <organismsDiffer>false</organismsDiffer>
    <experiments>3</experiments>
</comment>
<comment type="interaction">
    <interactant intactId="EBI-1391623">
        <id>P29474</id>
    </interactant>
    <interactant intactId="EBI-741332">
        <id>P57052</id>
        <label>RBM11</label>
    </interactant>
    <organismsDiffer>false</organismsDiffer>
    <experiments>3</experiments>
</comment>
<comment type="interaction">
    <interactant intactId="EBI-1391623">
        <id>P29474</id>
    </interactant>
    <interactant intactId="EBI-2856313">
        <id>Q9GZR2</id>
        <label>REXO4</label>
    </interactant>
    <organismsDiffer>false</organismsDiffer>
    <experiments>3</experiments>
</comment>
<comment type="interaction">
    <interactant intactId="EBI-1391623">
        <id>P29474</id>
    </interactant>
    <interactant intactId="EBI-743938">
        <id>Q96D59</id>
        <label>RNF183</label>
    </interactant>
    <organismsDiffer>false</organismsDiffer>
    <experiments>3</experiments>
</comment>
<comment type="interaction">
    <interactant intactId="EBI-1391623">
        <id>P29474</id>
    </interactant>
    <interactant intactId="EBI-11528848">
        <id>Q8N6K7-2</id>
        <label>SAMD3</label>
    </interactant>
    <organismsDiffer>false</organismsDiffer>
    <experiments>3</experiments>
</comment>
<comment type="interaction">
    <interactant intactId="EBI-1391623">
        <id>P29474</id>
    </interactant>
    <interactant intactId="EBI-358545">
        <id>Q9GZS3</id>
        <label>SKIC8</label>
    </interactant>
    <organismsDiffer>false</organismsDiffer>
    <experiments>3</experiments>
</comment>
<comment type="interaction">
    <interactant intactId="EBI-1391623">
        <id>P29474</id>
    </interactant>
    <interactant intactId="EBI-2510414">
        <id>Q8IUW3</id>
        <label>SPATA2L</label>
    </interactant>
    <organismsDiffer>false</organismsDiffer>
    <experiments>3</experiments>
</comment>
<comment type="interaction">
    <interactant intactId="EBI-1391623">
        <id>P29474</id>
    </interactant>
    <interactant intactId="EBI-5235340">
        <id>Q7Z699</id>
        <label>SPRED1</label>
    </interactant>
    <organismsDiffer>false</organismsDiffer>
    <experiments>3</experiments>
</comment>
<comment type="interaction">
    <interactant intactId="EBI-1391623">
        <id>P29474</id>
    </interactant>
    <interactant intactId="EBI-7082156">
        <id>Q7Z698</id>
        <label>SPRED2</label>
    </interactant>
    <organismsDiffer>false</organismsDiffer>
    <experiments>3</experiments>
</comment>
<comment type="interaction">
    <interactant intactId="EBI-1391623">
        <id>P29474</id>
    </interactant>
    <interactant intactId="EBI-357285">
        <id>P50502</id>
        <label>ST13</label>
    </interactant>
    <organismsDiffer>false</organismsDiffer>
    <experiments>3</experiments>
</comment>
<comment type="interaction">
    <interactant intactId="EBI-1391623">
        <id>P29474</id>
    </interactant>
    <interactant intactId="EBI-25831443">
        <id>Q9BR01-2</id>
        <label>SULT4A1</label>
    </interactant>
    <organismsDiffer>false</organismsDiffer>
    <experiments>3</experiments>
</comment>
<comment type="interaction">
    <interactant intactId="EBI-1391623">
        <id>P29474</id>
    </interactant>
    <interactant intactId="EBI-741515">
        <id>Q9NVV9</id>
        <label>THAP1</label>
    </interactant>
    <organismsDiffer>false</organismsDiffer>
    <experiments>3</experiments>
</comment>
<comment type="interaction">
    <interactant intactId="EBI-1391623">
        <id>P29474</id>
    </interactant>
    <interactant intactId="EBI-11525489">
        <id>Q86WT6-2</id>
        <label>TRIM69</label>
    </interactant>
    <organismsDiffer>false</organismsDiffer>
    <experiments>3</experiments>
</comment>
<comment type="interaction">
    <interactant intactId="EBI-1391623">
        <id>P29474</id>
    </interactant>
    <interactant intactId="EBI-25832660">
        <id>Q9H347</id>
        <label>UBQLN3</label>
    </interactant>
    <organismsDiffer>false</organismsDiffer>
    <experiments>3</experiments>
</comment>
<comment type="interaction">
    <interactant intactId="EBI-1391623">
        <id>P29474</id>
    </interactant>
    <interactant intactId="EBI-6427899">
        <id>P58304</id>
        <label>VSX2</label>
    </interactant>
    <organismsDiffer>false</organismsDiffer>
    <experiments>3</experiments>
</comment>
<comment type="interaction">
    <interactant intactId="EBI-1391623">
        <id>P29474</id>
    </interactant>
    <interactant intactId="EBI-12040603">
        <id>Q9NZC7-5</id>
        <label>WWOX</label>
    </interactant>
    <organismsDiffer>false</organismsDiffer>
    <experiments>3</experiments>
</comment>
<comment type="interaction">
    <interactant intactId="EBI-1391623">
        <id>P29474</id>
    </interactant>
    <interactant intactId="EBI-749023">
        <id>Q9UNY5</id>
        <label>ZNF232</label>
    </interactant>
    <organismsDiffer>false</organismsDiffer>
    <experiments>3</experiments>
</comment>
<comment type="interaction">
    <interactant intactId="EBI-1391623">
        <id>P29474</id>
    </interactant>
    <interactant intactId="EBI-9675698">
        <id>P14079</id>
        <label>tax</label>
    </interactant>
    <organismsDiffer>true</organismsDiffer>
    <experiments>3</experiments>
</comment>
<comment type="subcellular location">
    <subcellularLocation>
        <location>Cell membrane</location>
    </subcellularLocation>
    <subcellularLocation>
        <location>Membrane</location>
        <location>Caveola</location>
    </subcellularLocation>
    <subcellularLocation>
        <location>Cytoplasm</location>
        <location>Cytoskeleton</location>
    </subcellularLocation>
    <subcellularLocation>
        <location>Golgi apparatus</location>
    </subcellularLocation>
    <text>Specifically associates with actin cytoskeleton in the G2 phase of the cell cycle; which is favored by interaction with NOSIP and results in a reduced enzymatic activity.</text>
</comment>
<comment type="alternative products">
    <event type="alternative splicing"/>
    <isoform>
        <id>P29474-1</id>
        <name>1</name>
        <sequence type="displayed"/>
    </isoform>
    <isoform>
        <id>P29474-2</id>
        <name>eNOS13C</name>
        <sequence type="described" ref="VSP_042625 VSP_042626"/>
    </isoform>
    <isoform>
        <id>P29474-3</id>
        <name>eNOS13B</name>
        <sequence type="described" ref="VSP_045495 VSP_045496"/>
    </isoform>
</comment>
<comment type="tissue specificity">
    <text evidence="28">Platelets, placenta, liver and kidney.</text>
</comment>
<comment type="PTM">
    <text evidence="1 20 24">Phosphorylation by AMPK at Ser-1177 in the presence of Ca(2+)-calmodulin (CaM) activates activity. In absence of Ca(2+)-calmodulin, AMPK also phosphorylates Thr-495, resulting in inhibition of activity (By similarity). Phosphorylation of Ser-114 by CDK5 reduces activity.</text>
</comment>
<comment type="disease">
    <text evidence="12 31">Variation Asp-298 in NOS3 may be associated with susceptibility to coronary spasm.</text>
</comment>
<comment type="miscellaneous">
    <molecule>Isoform eNOS13C</molecule>
    <text evidence="39">Lacks eNOS activity.</text>
</comment>
<comment type="similarity">
    <text evidence="39">Belongs to the NOS family.</text>
</comment>
<comment type="online information" name="Wikipedia">
    <link uri="https://en.wikipedia.org/wiki/Nitric_oxide_synthase"/>
    <text>Nitric oxide synthase entry</text>
</comment>
<keyword id="KW-0002">3D-structure</keyword>
<keyword id="KW-0025">Alternative splicing</keyword>
<keyword id="KW-0106">Calcium</keyword>
<keyword id="KW-0112">Calmodulin-binding</keyword>
<keyword id="KW-1003">Cell membrane</keyword>
<keyword id="KW-0963">Cytoplasm</keyword>
<keyword id="KW-0206">Cytoskeleton</keyword>
<keyword id="KW-0903">Direct protein sequencing</keyword>
<keyword id="KW-0274">FAD</keyword>
<keyword id="KW-0285">Flavoprotein</keyword>
<keyword id="KW-0288">FMN</keyword>
<keyword id="KW-0333">Golgi apparatus</keyword>
<keyword id="KW-0349">Heme</keyword>
<keyword id="KW-0408">Iron</keyword>
<keyword id="KW-0449">Lipoprotein</keyword>
<keyword id="KW-0472">Membrane</keyword>
<keyword id="KW-0479">Metal-binding</keyword>
<keyword id="KW-0519">Myristate</keyword>
<keyword id="KW-0521">NADP</keyword>
<keyword id="KW-0560">Oxidoreductase</keyword>
<keyword id="KW-0564">Palmitate</keyword>
<keyword id="KW-0597">Phosphoprotein</keyword>
<keyword id="KW-1267">Proteomics identification</keyword>
<keyword id="KW-1185">Reference proteome</keyword>
<keyword id="KW-0862">Zinc</keyword>
<organism>
    <name type="scientific">Homo sapiens</name>
    <name type="common">Human</name>
    <dbReference type="NCBI Taxonomy" id="9606"/>
    <lineage>
        <taxon>Eukaryota</taxon>
        <taxon>Metazoa</taxon>
        <taxon>Chordata</taxon>
        <taxon>Craniata</taxon>
        <taxon>Vertebrata</taxon>
        <taxon>Euteleostomi</taxon>
        <taxon>Mammalia</taxon>
        <taxon>Eutheria</taxon>
        <taxon>Euarchontoglires</taxon>
        <taxon>Primates</taxon>
        <taxon>Haplorrhini</taxon>
        <taxon>Catarrhini</taxon>
        <taxon>Hominidae</taxon>
        <taxon>Homo</taxon>
    </lineage>
</organism>
<gene>
    <name evidence="41" type="primary">NOS3</name>
</gene>
<accession>P29474</accession>
<accession>A0S0A7</accession>
<accession>A0S0A8</accession>
<accession>A8KA63</accession>
<accession>B2RCQ1</accession>
<accession>E9PFR2</accession>
<accession>Q13662</accession>
<accession>Q14251</accession>
<accession>Q14434</accession>
<accession>Q548C1</accession>
<accession>Q6GSL5</accession>
<accession>Q9UDC6</accession>
<dbReference type="EC" id="1.14.13.39" evidence="16 27"/>
<dbReference type="EMBL" id="M93718">
    <property type="protein sequence ID" value="AAA36364.1"/>
    <property type="molecule type" value="mRNA"/>
</dbReference>
<dbReference type="EMBL" id="M95296">
    <property type="protein sequence ID" value="AAA36372.1"/>
    <property type="molecule type" value="mRNA"/>
</dbReference>
<dbReference type="EMBL" id="L10709">
    <property type="protein sequence ID" value="AAA36365.1"/>
    <property type="molecule type" value="Genomic_DNA"/>
</dbReference>
<dbReference type="EMBL" id="L10693">
    <property type="protein sequence ID" value="AAA36365.1"/>
    <property type="status" value="JOINED"/>
    <property type="molecule type" value="Genomic_DNA"/>
</dbReference>
<dbReference type="EMBL" id="L10694">
    <property type="protein sequence ID" value="AAA36365.1"/>
    <property type="status" value="JOINED"/>
    <property type="molecule type" value="Genomic_DNA"/>
</dbReference>
<dbReference type="EMBL" id="L10695">
    <property type="protein sequence ID" value="AAA36365.1"/>
    <property type="status" value="JOINED"/>
    <property type="molecule type" value="Genomic_DNA"/>
</dbReference>
<dbReference type="EMBL" id="L10696">
    <property type="protein sequence ID" value="AAA36365.1"/>
    <property type="status" value="JOINED"/>
    <property type="molecule type" value="Genomic_DNA"/>
</dbReference>
<dbReference type="EMBL" id="L10697">
    <property type="protein sequence ID" value="AAA36365.1"/>
    <property type="status" value="JOINED"/>
    <property type="molecule type" value="Genomic_DNA"/>
</dbReference>
<dbReference type="EMBL" id="L10698">
    <property type="protein sequence ID" value="AAA36365.1"/>
    <property type="status" value="JOINED"/>
    <property type="molecule type" value="Genomic_DNA"/>
</dbReference>
<dbReference type="EMBL" id="L10699">
    <property type="protein sequence ID" value="AAA36365.1"/>
    <property type="status" value="JOINED"/>
    <property type="molecule type" value="Genomic_DNA"/>
</dbReference>
<dbReference type="EMBL" id="L10700">
    <property type="protein sequence ID" value="AAA36365.1"/>
    <property type="status" value="JOINED"/>
    <property type="molecule type" value="Genomic_DNA"/>
</dbReference>
<dbReference type="EMBL" id="L10701">
    <property type="protein sequence ID" value="AAA36365.1"/>
    <property type="status" value="JOINED"/>
    <property type="molecule type" value="Genomic_DNA"/>
</dbReference>
<dbReference type="EMBL" id="L10702">
    <property type="protein sequence ID" value="AAA36365.1"/>
    <property type="status" value="JOINED"/>
    <property type="molecule type" value="Genomic_DNA"/>
</dbReference>
<dbReference type="EMBL" id="L10703">
    <property type="protein sequence ID" value="AAA36365.1"/>
    <property type="status" value="JOINED"/>
    <property type="molecule type" value="Genomic_DNA"/>
</dbReference>
<dbReference type="EMBL" id="L10704">
    <property type="protein sequence ID" value="AAA36365.1"/>
    <property type="status" value="JOINED"/>
    <property type="molecule type" value="Genomic_DNA"/>
</dbReference>
<dbReference type="EMBL" id="L10705">
    <property type="protein sequence ID" value="AAA36365.1"/>
    <property type="status" value="JOINED"/>
    <property type="molecule type" value="Genomic_DNA"/>
</dbReference>
<dbReference type="EMBL" id="L10706">
    <property type="protein sequence ID" value="AAA36365.1"/>
    <property type="status" value="JOINED"/>
    <property type="molecule type" value="Genomic_DNA"/>
</dbReference>
<dbReference type="EMBL" id="L10707">
    <property type="protein sequence ID" value="AAA36365.1"/>
    <property type="status" value="JOINED"/>
    <property type="molecule type" value="Genomic_DNA"/>
</dbReference>
<dbReference type="EMBL" id="L10708">
    <property type="protein sequence ID" value="AAA36365.1"/>
    <property type="status" value="JOINED"/>
    <property type="molecule type" value="Genomic_DNA"/>
</dbReference>
<dbReference type="EMBL" id="X76303">
    <property type="protein sequence ID" value="CAA53950.1"/>
    <property type="molecule type" value="Genomic_DNA"/>
</dbReference>
<dbReference type="EMBL" id="X76304">
    <property type="protein sequence ID" value="CAA53950.1"/>
    <property type="status" value="JOINED"/>
    <property type="molecule type" value="Genomic_DNA"/>
</dbReference>
<dbReference type="EMBL" id="X76305">
    <property type="protein sequence ID" value="CAA53950.1"/>
    <property type="status" value="JOINED"/>
    <property type="molecule type" value="Genomic_DNA"/>
</dbReference>
<dbReference type="EMBL" id="X76306">
    <property type="protein sequence ID" value="CAA53950.1"/>
    <property type="status" value="JOINED"/>
    <property type="molecule type" value="Genomic_DNA"/>
</dbReference>
<dbReference type="EMBL" id="X76307">
    <property type="protein sequence ID" value="CAA53950.1"/>
    <property type="status" value="JOINED"/>
    <property type="molecule type" value="Genomic_DNA"/>
</dbReference>
<dbReference type="EMBL" id="X76308">
    <property type="protein sequence ID" value="CAA53950.1"/>
    <property type="status" value="JOINED"/>
    <property type="molecule type" value="Genomic_DNA"/>
</dbReference>
<dbReference type="EMBL" id="X76309">
    <property type="protein sequence ID" value="CAA53950.1"/>
    <property type="status" value="JOINED"/>
    <property type="molecule type" value="Genomic_DNA"/>
</dbReference>
<dbReference type="EMBL" id="X76310">
    <property type="protein sequence ID" value="CAA53950.1"/>
    <property type="status" value="JOINED"/>
    <property type="molecule type" value="Genomic_DNA"/>
</dbReference>
<dbReference type="EMBL" id="X76311">
    <property type="protein sequence ID" value="CAA53950.1"/>
    <property type="status" value="JOINED"/>
    <property type="molecule type" value="Genomic_DNA"/>
</dbReference>
<dbReference type="EMBL" id="X76312">
    <property type="protein sequence ID" value="CAA53950.1"/>
    <property type="status" value="JOINED"/>
    <property type="molecule type" value="Genomic_DNA"/>
</dbReference>
<dbReference type="EMBL" id="X76313">
    <property type="protein sequence ID" value="CAA53950.1"/>
    <property type="status" value="JOINED"/>
    <property type="molecule type" value="Genomic_DNA"/>
</dbReference>
<dbReference type="EMBL" id="X76314">
    <property type="protein sequence ID" value="CAA53950.1"/>
    <property type="status" value="JOINED"/>
    <property type="molecule type" value="Genomic_DNA"/>
</dbReference>
<dbReference type="EMBL" id="X76315">
    <property type="protein sequence ID" value="CAA53950.1"/>
    <property type="status" value="JOINED"/>
    <property type="molecule type" value="Genomic_DNA"/>
</dbReference>
<dbReference type="EMBL" id="X76316">
    <property type="protein sequence ID" value="CAA53950.1"/>
    <property type="status" value="JOINED"/>
    <property type="molecule type" value="Genomic_DNA"/>
</dbReference>
<dbReference type="EMBL" id="D26607">
    <property type="protein sequence ID" value="BAA05652.1"/>
    <property type="molecule type" value="Genomic_DNA"/>
</dbReference>
<dbReference type="EMBL" id="DQ256130">
    <property type="protein sequence ID" value="ABB79839.1"/>
    <property type="molecule type" value="mRNA"/>
</dbReference>
<dbReference type="EMBL" id="DQ256131">
    <property type="protein sequence ID" value="ABB79840.1"/>
    <property type="molecule type" value="mRNA"/>
</dbReference>
<dbReference type="EMBL" id="L26914">
    <property type="protein sequence ID" value="AAA36374.1"/>
    <property type="molecule type" value="Genomic_DNA"/>
</dbReference>
<dbReference type="EMBL" id="AF400594">
    <property type="protein sequence ID" value="AAK83389.1"/>
    <property type="molecule type" value="mRNA"/>
</dbReference>
<dbReference type="EMBL" id="AK292928">
    <property type="protein sequence ID" value="BAF85617.1"/>
    <property type="molecule type" value="mRNA"/>
</dbReference>
<dbReference type="EMBL" id="AK315213">
    <property type="protein sequence ID" value="BAG37648.1"/>
    <property type="molecule type" value="mRNA"/>
</dbReference>
<dbReference type="EMBL" id="AK223636">
    <property type="protein sequence ID" value="BAD97356.1"/>
    <property type="molecule type" value="mRNA"/>
</dbReference>
<dbReference type="EMBL" id="AF519768">
    <property type="protein sequence ID" value="AAM74944.1"/>
    <property type="molecule type" value="Genomic_DNA"/>
</dbReference>
<dbReference type="EMBL" id="EU332855">
    <property type="protein sequence ID" value="ABY87544.1"/>
    <property type="molecule type" value="Genomic_DNA"/>
</dbReference>
<dbReference type="EMBL" id="AC010973">
    <property type="status" value="NOT_ANNOTATED_CDS"/>
    <property type="molecule type" value="Genomic_DNA"/>
</dbReference>
<dbReference type="EMBL" id="CH471173">
    <property type="protein sequence ID" value="EAW54069.1"/>
    <property type="molecule type" value="Genomic_DNA"/>
</dbReference>
<dbReference type="EMBL" id="BC063294">
    <property type="protein sequence ID" value="AAH63294.1"/>
    <property type="molecule type" value="mRNA"/>
</dbReference>
<dbReference type="EMBL" id="BC069465">
    <property type="protein sequence ID" value="AAH69465.1"/>
    <property type="molecule type" value="mRNA"/>
</dbReference>
<dbReference type="EMBL" id="L23210">
    <property type="protein sequence ID" value="AAA36373.1"/>
    <property type="molecule type" value="Genomic_DNA"/>
</dbReference>
<dbReference type="EMBL" id="S80791">
    <property type="protein sequence ID" value="AAD14336.1"/>
    <property type="molecule type" value="mRNA"/>
</dbReference>
<dbReference type="CCDS" id="CCDS55182.1">
    <molecule id="P29474-2"/>
</dbReference>
<dbReference type="CCDS" id="CCDS55183.1">
    <molecule id="P29474-3"/>
</dbReference>
<dbReference type="CCDS" id="CCDS5912.1">
    <molecule id="P29474-1"/>
</dbReference>
<dbReference type="PIR" id="A47501">
    <property type="entry name" value="A47501"/>
</dbReference>
<dbReference type="RefSeq" id="NP_000594.2">
    <molecule id="P29474-1"/>
    <property type="nucleotide sequence ID" value="NM_000603.4"/>
</dbReference>
<dbReference type="RefSeq" id="NP_001153581.1">
    <property type="nucleotide sequence ID" value="NM_001160109.1"/>
</dbReference>
<dbReference type="RefSeq" id="NP_001153582.1">
    <molecule id="P29474-3"/>
    <property type="nucleotide sequence ID" value="NM_001160110.1"/>
</dbReference>
<dbReference type="RefSeq" id="NP_001153583.1">
    <molecule id="P29474-2"/>
    <property type="nucleotide sequence ID" value="NM_001160111.1"/>
</dbReference>
<dbReference type="RefSeq" id="XP_016867721.1">
    <property type="nucleotide sequence ID" value="XM_017012232.1"/>
</dbReference>
<dbReference type="PDB" id="1M9J">
    <property type="method" value="X-ray"/>
    <property type="resolution" value="2.43 A"/>
    <property type="chains" value="A/B=67-481"/>
</dbReference>
<dbReference type="PDB" id="1M9K">
    <property type="method" value="X-ray"/>
    <property type="resolution" value="2.01 A"/>
    <property type="chains" value="A/B=67-481"/>
</dbReference>
<dbReference type="PDB" id="1M9M">
    <property type="method" value="X-ray"/>
    <property type="resolution" value="1.96 A"/>
    <property type="chains" value="A/B=67-481"/>
</dbReference>
<dbReference type="PDB" id="1M9Q">
    <property type="method" value="X-ray"/>
    <property type="resolution" value="2.01 A"/>
    <property type="chains" value="A/B=67-481"/>
</dbReference>
<dbReference type="PDB" id="1M9R">
    <property type="method" value="X-ray"/>
    <property type="resolution" value="2.56 A"/>
    <property type="chains" value="A/B=67-481"/>
</dbReference>
<dbReference type="PDB" id="1NIW">
    <property type="method" value="X-ray"/>
    <property type="resolution" value="2.05 A"/>
    <property type="chains" value="B/D/F/H=492-511"/>
</dbReference>
<dbReference type="PDB" id="2LL7">
    <property type="method" value="NMR"/>
    <property type="chains" value="B=493-509"/>
</dbReference>
<dbReference type="PDB" id="2MG5">
    <property type="method" value="NMR"/>
    <property type="chains" value="B=495-510"/>
</dbReference>
<dbReference type="PDB" id="2N8J">
    <property type="method" value="NMR"/>
    <property type="chains" value="B=491-512"/>
</dbReference>
<dbReference type="PDB" id="3EAH">
    <property type="method" value="X-ray"/>
    <property type="resolution" value="2.44 A"/>
    <property type="chains" value="A/B=66-492"/>
</dbReference>
<dbReference type="PDB" id="3NOS">
    <property type="method" value="X-ray"/>
    <property type="resolution" value="2.40 A"/>
    <property type="chains" value="A/B=66-492"/>
</dbReference>
<dbReference type="PDB" id="4D1O">
    <property type="method" value="X-ray"/>
    <property type="resolution" value="1.82 A"/>
    <property type="chains" value="A/B=41-480"/>
</dbReference>
<dbReference type="PDB" id="4D1P">
    <property type="method" value="X-ray"/>
    <property type="resolution" value="1.73 A"/>
    <property type="chains" value="A/B=41-480"/>
</dbReference>
<dbReference type="PDB" id="5UO8">
    <property type="method" value="X-ray"/>
    <property type="resolution" value="2.18 A"/>
    <property type="chains" value="A/B/C/D=41-480"/>
</dbReference>
<dbReference type="PDB" id="5UO9">
    <property type="method" value="X-ray"/>
    <property type="resolution" value="2.19 A"/>
    <property type="chains" value="A/B/C/D=41-480"/>
</dbReference>
<dbReference type="PDB" id="5UOA">
    <property type="method" value="X-ray"/>
    <property type="resolution" value="2.20 A"/>
    <property type="chains" value="A/B=41-480"/>
</dbReference>
<dbReference type="PDB" id="5UOB">
    <property type="method" value="X-ray"/>
    <property type="resolution" value="2.29 A"/>
    <property type="chains" value="A/B/C/D=41-480"/>
</dbReference>
<dbReference type="PDB" id="5UOC">
    <property type="method" value="X-ray"/>
    <property type="resolution" value="2.20 A"/>
    <property type="chains" value="A/B/C/D=41-480"/>
</dbReference>
<dbReference type="PDB" id="5VVB">
    <property type="method" value="X-ray"/>
    <property type="resolution" value="2.15 A"/>
    <property type="chains" value="A/B/C/D=41-480"/>
</dbReference>
<dbReference type="PDB" id="5VVC">
    <property type="method" value="X-ray"/>
    <property type="resolution" value="2.40 A"/>
    <property type="chains" value="A/B/C/D=41-480"/>
</dbReference>
<dbReference type="PDB" id="5VVD">
    <property type="method" value="X-ray"/>
    <property type="resolution" value="2.25 A"/>
    <property type="chains" value="A/B/C/D=41-480"/>
</dbReference>
<dbReference type="PDB" id="5XOF">
    <property type="method" value="X-ray"/>
    <property type="resolution" value="1.96 A"/>
    <property type="chains" value="O/P/Q/R=30-36"/>
</dbReference>
<dbReference type="PDB" id="6AV6">
    <property type="method" value="X-ray"/>
    <property type="resolution" value="2.08 A"/>
    <property type="chains" value="A/B/C/D=41-480"/>
</dbReference>
<dbReference type="PDB" id="6AV7">
    <property type="method" value="X-ray"/>
    <property type="resolution" value="1.92 A"/>
    <property type="chains" value="A/B/C/D=41-480"/>
</dbReference>
<dbReference type="PDB" id="6CIE">
    <property type="method" value="X-ray"/>
    <property type="resolution" value="1.95 A"/>
    <property type="chains" value="A/B/C/D=41-480"/>
</dbReference>
<dbReference type="PDB" id="6CIF">
    <property type="method" value="X-ray"/>
    <property type="resolution" value="2.20 A"/>
    <property type="chains" value="A/B/C/D=41-480"/>
</dbReference>
<dbReference type="PDB" id="6NH1">
    <property type="method" value="X-ray"/>
    <property type="resolution" value="2.22 A"/>
    <property type="chains" value="A/B/C/D=41-480"/>
</dbReference>
<dbReference type="PDB" id="6NH2">
    <property type="method" value="X-ray"/>
    <property type="resolution" value="2.29 A"/>
    <property type="chains" value="A/B/C/D=41-480"/>
</dbReference>
<dbReference type="PDB" id="6NH3">
    <property type="method" value="X-ray"/>
    <property type="resolution" value="2.01 A"/>
    <property type="chains" value="A/B/C/D=41-480"/>
</dbReference>
<dbReference type="PDB" id="6NH4">
    <property type="method" value="X-ray"/>
    <property type="resolution" value="2.27 A"/>
    <property type="chains" value="A/B/C/D=41-480"/>
</dbReference>
<dbReference type="PDB" id="6NH5">
    <property type="method" value="X-ray"/>
    <property type="resolution" value="1.96 A"/>
    <property type="chains" value="A/B/C/D=41-480"/>
</dbReference>
<dbReference type="PDB" id="6NH6">
    <property type="method" value="X-ray"/>
    <property type="resolution" value="2.19 A"/>
    <property type="chains" value="A/B/C/D=41-480"/>
</dbReference>
<dbReference type="PDB" id="6NH7">
    <property type="method" value="X-ray"/>
    <property type="resolution" value="1.90 A"/>
    <property type="chains" value="A/B=41-480"/>
</dbReference>
<dbReference type="PDB" id="6NH8">
    <property type="method" value="X-ray"/>
    <property type="resolution" value="1.80 A"/>
    <property type="chains" value="A/B/C/D=41-480"/>
</dbReference>
<dbReference type="PDB" id="6NHF">
    <property type="method" value="X-ray"/>
    <property type="resolution" value="1.83 A"/>
    <property type="chains" value="A/B/C/D=41-480"/>
</dbReference>
<dbReference type="PDB" id="6POU">
    <property type="method" value="X-ray"/>
    <property type="resolution" value="2.19 A"/>
    <property type="chains" value="A/B/C/D/E/F=41-480"/>
</dbReference>
<dbReference type="PDB" id="6POV">
    <property type="method" value="X-ray"/>
    <property type="resolution" value="2.05 A"/>
    <property type="chains" value="A/B/C/D=41-480"/>
</dbReference>
<dbReference type="PDB" id="6POW">
    <property type="method" value="X-ray"/>
    <property type="resolution" value="2.15 A"/>
    <property type="chains" value="A/B/C/D=41-480"/>
</dbReference>
<dbReference type="PDB" id="6POX">
    <property type="method" value="X-ray"/>
    <property type="resolution" value="2.20 A"/>
    <property type="chains" value="A/B/C/D=41-480"/>
</dbReference>
<dbReference type="PDB" id="6POY">
    <property type="method" value="X-ray"/>
    <property type="resolution" value="2.30 A"/>
    <property type="chains" value="A/B/C/D=41-480"/>
</dbReference>
<dbReference type="PDB" id="6POZ">
    <property type="method" value="X-ray"/>
    <property type="resolution" value="2.20 A"/>
    <property type="chains" value="A/B/C/D=41-480"/>
</dbReference>
<dbReference type="PDB" id="6PP0">
    <property type="method" value="X-ray"/>
    <property type="resolution" value="1.97 A"/>
    <property type="chains" value="A/B/C/D=41-480"/>
</dbReference>
<dbReference type="PDB" id="6PP1">
    <property type="method" value="X-ray"/>
    <property type="resolution" value="1.76 A"/>
    <property type="chains" value="A/B/C/D=41-480"/>
</dbReference>
<dbReference type="PDB" id="6PP2">
    <property type="method" value="X-ray"/>
    <property type="resolution" value="2.02 A"/>
    <property type="chains" value="A/B/C/D=41-480"/>
</dbReference>
<dbReference type="PDB" id="6PP3">
    <property type="method" value="X-ray"/>
    <property type="resolution" value="1.95 A"/>
    <property type="chains" value="A/B/C/D=41-480"/>
</dbReference>
<dbReference type="PDB" id="6PP4">
    <property type="method" value="X-ray"/>
    <property type="resolution" value="2.20 A"/>
    <property type="chains" value="A/B/C/D=41-480"/>
</dbReference>
<dbReference type="PDB" id="7M56">
    <property type="method" value="X-ray"/>
    <property type="resolution" value="1.96 A"/>
    <property type="chains" value="A/B=41-480"/>
</dbReference>
<dbReference type="PDB" id="7TSG">
    <property type="method" value="X-ray"/>
    <property type="resolution" value="1.85 A"/>
    <property type="chains" value="A/B/C/D=41-480"/>
</dbReference>
<dbReference type="PDB" id="7TSH">
    <property type="method" value="X-ray"/>
    <property type="resolution" value="2.15 A"/>
    <property type="chains" value="A/B/C/D=41-480"/>
</dbReference>
<dbReference type="PDB" id="7TSI">
    <property type="method" value="X-ray"/>
    <property type="resolution" value="2.10 A"/>
    <property type="chains" value="A/B/C/D=41-480"/>
</dbReference>
<dbReference type="PDB" id="7TSK">
    <property type="method" value="X-ray"/>
    <property type="resolution" value="2.05 A"/>
    <property type="chains" value="A/B/C/D=41-480"/>
</dbReference>
<dbReference type="PDB" id="7TSL">
    <property type="method" value="X-ray"/>
    <property type="resolution" value="1.90 A"/>
    <property type="chains" value="A/B/C/D=41-480"/>
</dbReference>
<dbReference type="PDB" id="7TSM">
    <property type="method" value="X-ray"/>
    <property type="resolution" value="1.85 A"/>
    <property type="chains" value="A/B/C/D=41-480"/>
</dbReference>
<dbReference type="PDB" id="7TSN">
    <property type="method" value="X-ray"/>
    <property type="resolution" value="2.08 A"/>
    <property type="chains" value="A/B/C/D=41-480"/>
</dbReference>
<dbReference type="PDB" id="7TSO">
    <property type="method" value="X-ray"/>
    <property type="resolution" value="2.00 A"/>
    <property type="chains" value="A/B/C/D=41-480"/>
</dbReference>
<dbReference type="PDB" id="7TSP">
    <property type="method" value="X-ray"/>
    <property type="resolution" value="2.00 A"/>
    <property type="chains" value="A/B/C/D=41-480"/>
</dbReference>
<dbReference type="PDB" id="7UAO">
    <property type="method" value="X-ray"/>
    <property type="resolution" value="1.90 A"/>
    <property type="chains" value="A/B/C/D=41-480"/>
</dbReference>
<dbReference type="PDB" id="8FGN">
    <property type="method" value="X-ray"/>
    <property type="resolution" value="2.20 A"/>
    <property type="chains" value="A/B/C/D=41-480"/>
</dbReference>
<dbReference type="PDB" id="8FGO">
    <property type="method" value="X-ray"/>
    <property type="resolution" value="1.80 A"/>
    <property type="chains" value="A/B/C/D=41-480"/>
</dbReference>
<dbReference type="PDB" id="8FGP">
    <property type="method" value="X-ray"/>
    <property type="resolution" value="1.88 A"/>
    <property type="chains" value="A/B/C/D=41-480"/>
</dbReference>
<dbReference type="PDB" id="8FGQ">
    <property type="method" value="X-ray"/>
    <property type="resolution" value="2.20 A"/>
    <property type="chains" value="A/B/C/D=41-480"/>
</dbReference>
<dbReference type="PDB" id="8FGR">
    <property type="method" value="X-ray"/>
    <property type="resolution" value="1.98 A"/>
    <property type="chains" value="A/B/C/D=41-480"/>
</dbReference>
<dbReference type="PDB" id="8FGS">
    <property type="method" value="X-ray"/>
    <property type="resolution" value="1.84 A"/>
    <property type="chains" value="A/B/C/D=41-480"/>
</dbReference>
<dbReference type="PDB" id="8FGT">
    <property type="method" value="X-ray"/>
    <property type="resolution" value="1.90 A"/>
    <property type="chains" value="A/B/C/D=41-480"/>
</dbReference>
<dbReference type="PDB" id="8FGU">
    <property type="method" value="X-ray"/>
    <property type="resolution" value="2.00 A"/>
    <property type="chains" value="A/B/C/D=41-480"/>
</dbReference>
<dbReference type="PDB" id="8UFR">
    <property type="method" value="X-ray"/>
    <property type="resolution" value="1.87 A"/>
    <property type="chains" value="A/B/C/D=41-480"/>
</dbReference>
<dbReference type="PDB" id="8UFS">
    <property type="method" value="X-ray"/>
    <property type="resolution" value="2.05 A"/>
    <property type="chains" value="A/B/C/D=41-480"/>
</dbReference>
<dbReference type="PDB" id="8UFT">
    <property type="method" value="X-ray"/>
    <property type="resolution" value="1.78 A"/>
    <property type="chains" value="A/B/C/D=41-480"/>
</dbReference>
<dbReference type="PDB" id="8UFU">
    <property type="method" value="X-ray"/>
    <property type="resolution" value="2.05 A"/>
    <property type="chains" value="A/B/C/D=41-480"/>
</dbReference>
<dbReference type="PDBsum" id="1M9J"/>
<dbReference type="PDBsum" id="1M9K"/>
<dbReference type="PDBsum" id="1M9M"/>
<dbReference type="PDBsum" id="1M9Q"/>
<dbReference type="PDBsum" id="1M9R"/>
<dbReference type="PDBsum" id="1NIW"/>
<dbReference type="PDBsum" id="2LL7"/>
<dbReference type="PDBsum" id="2MG5"/>
<dbReference type="PDBsum" id="2N8J"/>
<dbReference type="PDBsum" id="3EAH"/>
<dbReference type="PDBsum" id="3NOS"/>
<dbReference type="PDBsum" id="4D1O"/>
<dbReference type="PDBsum" id="4D1P"/>
<dbReference type="PDBsum" id="5UO8"/>
<dbReference type="PDBsum" id="5UO9"/>
<dbReference type="PDBsum" id="5UOA"/>
<dbReference type="PDBsum" id="5UOB"/>
<dbReference type="PDBsum" id="5UOC"/>
<dbReference type="PDBsum" id="5VVB"/>
<dbReference type="PDBsum" id="5VVC"/>
<dbReference type="PDBsum" id="5VVD"/>
<dbReference type="PDBsum" id="5XOF"/>
<dbReference type="PDBsum" id="6AV6"/>
<dbReference type="PDBsum" id="6AV7"/>
<dbReference type="PDBsum" id="6CIE"/>
<dbReference type="PDBsum" id="6CIF"/>
<dbReference type="PDBsum" id="6NH1"/>
<dbReference type="PDBsum" id="6NH2"/>
<dbReference type="PDBsum" id="6NH3"/>
<dbReference type="PDBsum" id="6NH4"/>
<dbReference type="PDBsum" id="6NH5"/>
<dbReference type="PDBsum" id="6NH6"/>
<dbReference type="PDBsum" id="6NH7"/>
<dbReference type="PDBsum" id="6NH8"/>
<dbReference type="PDBsum" id="6NHF"/>
<dbReference type="PDBsum" id="6POU"/>
<dbReference type="PDBsum" id="6POV"/>
<dbReference type="PDBsum" id="6POW"/>
<dbReference type="PDBsum" id="6POX"/>
<dbReference type="PDBsum" id="6POY"/>
<dbReference type="PDBsum" id="6POZ"/>
<dbReference type="PDBsum" id="6PP0"/>
<dbReference type="PDBsum" id="6PP1"/>
<dbReference type="PDBsum" id="6PP2"/>
<dbReference type="PDBsum" id="6PP3"/>
<dbReference type="PDBsum" id="6PP4"/>
<dbReference type="PDBsum" id="7M56"/>
<dbReference type="PDBsum" id="7TSG"/>
<dbReference type="PDBsum" id="7TSH"/>
<dbReference type="PDBsum" id="7TSI"/>
<dbReference type="PDBsum" id="7TSK"/>
<dbReference type="PDBsum" id="7TSL"/>
<dbReference type="PDBsum" id="7TSM"/>
<dbReference type="PDBsum" id="7TSN"/>
<dbReference type="PDBsum" id="7TSO"/>
<dbReference type="PDBsum" id="7TSP"/>
<dbReference type="PDBsum" id="7UAO"/>
<dbReference type="PDBsum" id="8FGN"/>
<dbReference type="PDBsum" id="8FGO"/>
<dbReference type="PDBsum" id="8FGP"/>
<dbReference type="PDBsum" id="8FGQ"/>
<dbReference type="PDBsum" id="8FGR"/>
<dbReference type="PDBsum" id="8FGS"/>
<dbReference type="PDBsum" id="8FGT"/>
<dbReference type="PDBsum" id="8FGU"/>
<dbReference type="PDBsum" id="8UFR"/>
<dbReference type="PDBsum" id="8UFS"/>
<dbReference type="PDBsum" id="8UFT"/>
<dbReference type="PDBsum" id="8UFU"/>
<dbReference type="BMRB" id="P29474"/>
<dbReference type="SMR" id="P29474"/>
<dbReference type="BioGRID" id="110909">
    <property type="interactions" value="52"/>
</dbReference>
<dbReference type="CORUM" id="P29474"/>
<dbReference type="DIP" id="DIP-38479N"/>
<dbReference type="FunCoup" id="P29474">
    <property type="interactions" value="1261"/>
</dbReference>
<dbReference type="IntAct" id="P29474">
    <property type="interactions" value="80"/>
</dbReference>
<dbReference type="MINT" id="P29474"/>
<dbReference type="STRING" id="9606.ENSP00000297494"/>
<dbReference type="BindingDB" id="P29474"/>
<dbReference type="ChEMBL" id="CHEMBL4803"/>
<dbReference type="DrugBank" id="DB07001">
    <property type="generic name" value="(3S,5E)-3-propyl-3,4-dihydrothieno[2,3-f][1,4]oxazepin-5(2H)-imine"/>
</dbReference>
<dbReference type="DrugBank" id="DB02048">
    <property type="generic name" value="1,2,4-Triazole-Carboxamidine"/>
</dbReference>
<dbReference type="DrugBank" id="DB02911">
    <property type="generic name" value="2,4-Diamino-6-Phenyl-5,6,7,8,-Tetrahydropteridine"/>
</dbReference>
<dbReference type="DrugBank" id="DB02335">
    <property type="generic name" value="2-Aminothiazoline"/>
</dbReference>
<dbReference type="DrugBank" id="DB01997">
    <property type="generic name" value="3-Bromo-7-Nitroindazole"/>
</dbReference>
<dbReference type="DrugBank" id="DB03332">
    <property type="generic name" value="5,6-Cyclic-Tetrahydropteridine"/>
</dbReference>
<dbReference type="DrugBank" id="DB04534">
    <property type="generic name" value="5-Nitroindazole"/>
</dbReference>
<dbReference type="DrugBank" id="DB07244">
    <property type="generic name" value="5-{4-[(3,5-DIFLUOROBENZYL)AMINO]PHENYL}-6-ETHYLPYRIMIDINE-2,4-DIAMINE"/>
</dbReference>
<dbReference type="DrugBank" id="DB03100">
    <property type="generic name" value="6-Nitroindazole"/>
</dbReference>
<dbReference type="DrugBank" id="DB03918">
    <property type="generic name" value="6S-5,6,7,8-Tetrahydrobiopterin"/>
</dbReference>
<dbReference type="DrugBank" id="DB02207">
    <property type="generic name" value="7-Nitroindazole"/>
</dbReference>
<dbReference type="DrugBank" id="DB03065">
    <property type="generic name" value="7-Nitroindazole-2-Carboxamidine"/>
</dbReference>
<dbReference type="DrugBank" id="DB14511">
    <property type="generic name" value="Acetate"/>
</dbReference>
<dbReference type="DrugBank" id="DB00125">
    <property type="generic name" value="Arginine"/>
</dbReference>
<dbReference type="DrugBank" id="DB02994">
    <property type="generic name" value="Cacodylic acid"/>
</dbReference>
<dbReference type="DrugBank" id="DB01833">
    <property type="generic name" value="Canavanine"/>
</dbReference>
<dbReference type="DrugBank" id="DB00155">
    <property type="generic name" value="Citrulline"/>
</dbReference>
<dbReference type="DrugBank" id="DB00997">
    <property type="generic name" value="Doxorubicin"/>
</dbReference>
<dbReference type="DrugBank" id="DB07388">
    <property type="generic name" value="ETHYL 4-[(4-METHYLPYRIDIN-2-YL)AMINO]PIPERIDINE-1-CARBOXYLATE"/>
</dbReference>
<dbReference type="DrugBank" id="DB05252">
    <property type="generic name" value="Fenoxaprop-ethyl"/>
</dbReference>
<dbReference type="DrugBank" id="DB18267">
    <property type="generic name" value="Ferroheme"/>
</dbReference>
<dbReference type="DrugBank" id="DB02325">
    <property type="generic name" value="Isopropyl alcohol"/>
</dbReference>
<dbReference type="DrugBank" id="DB03974">
    <property type="generic name" value="L-homoarginine"/>
</dbReference>
<dbReference type="DrugBank" id="DB02077">
    <property type="generic name" value="L-N(omega)-nitroarginine-(4R)-amino-L-proline amide"/>
</dbReference>
<dbReference type="DrugBank" id="DB01821">
    <property type="generic name" value="L-N(omega)-Nitroarginine-2,4-L-diaminobutyric amide"/>
</dbReference>
<dbReference type="DrugBank" id="DB09237">
    <property type="generic name" value="Levamlodipine"/>
</dbReference>
<dbReference type="DrugBank" id="DB01110">
    <property type="generic name" value="Miconazole"/>
</dbReference>
<dbReference type="DrugBank" id="DB03144">
    <property type="generic name" value="N(5)-[(hydroxyamino)(imino)methyl]-L-ornithine"/>
</dbReference>
<dbReference type="DrugBank" id="DB03305">
    <property type="generic name" value="N(G)-Iminoethylornithine"/>
</dbReference>
<dbReference type="DrugBank" id="DB01686">
    <property type="generic name" value="N,N-dimethylarginine"/>
</dbReference>
<dbReference type="DrugBank" id="DB04559">
    <property type="generic name" value="N-(Chlorophenyl)-N'-hydroxyguanidine"/>
</dbReference>
<dbReference type="DrugBank" id="DB02044">
    <property type="generic name" value="N-[3-(aminomethyl)benzyl]acetamidine"/>
</dbReference>
<dbReference type="DrugBank" id="DB12750">
    <property type="generic name" value="N-omega-nitro-L-arginine methyl ester"/>
</dbReference>
<dbReference type="DrugBank" id="DB08019">
    <property type="generic name" value="N-{(3R,4S)-4-[(6-amino-4-methylpyridin-2-yl)methyl]pyrrolidin-3-yl}-N'-(3-chlorobenzyl)ethane-1,2-diamine"/>
</dbReference>
<dbReference type="DrugBank" id="DB08018">
    <property type="generic name" value="N-{(3S,4S)-4-[(6-AMINO-4-METHYLPYRIDIN-2-YL)METHYL]PYRROLIDIN-3-YL}-N'-(4-CHLOROBENZYL)ETHANE-1,2-DIAMINE"/>
</dbReference>
<dbReference type="DrugBank" id="DB02027">
    <property type="generic name" value="N-{(4S)-4-Amino-5-[(2-aminoethyl)amino]pentyl}-N'-nitroguanidine"/>
</dbReference>
<dbReference type="DrugBank" id="DB02979">
    <property type="generic name" value="N1,N14-Bis((S-Methyl)Isothioureido)Tetradecane"/>
</dbReference>
<dbReference type="DrugBank" id="DB00435">
    <property type="generic name" value="Nitric Oxide"/>
</dbReference>
<dbReference type="DrugBank" id="DB04223">
    <property type="generic name" value="Nitroarginine"/>
</dbReference>
<dbReference type="DrugBank" id="DB06154">
    <property type="generic name" value="Pentaerythritol tetranitrate"/>
</dbReference>
<dbReference type="DrugBank" id="DB03910">
    <property type="generic name" value="S,S'-(1,3-Phenylene-Bis(1,2-Ethanediyl))Bis-Isothiourea"/>
</dbReference>
<dbReference type="DrugBank" id="DB02141">
    <property type="generic name" value="S,S'-(1,4-Phenylene-Bis(1,2-Ethanediyl))Bis-Isothiourea"/>
</dbReference>
<dbReference type="DrugBank" id="DB03963">
    <property type="generic name" value="S-(Dimethylarsenic)Cysteine"/>
</dbReference>
<dbReference type="DrugBank" id="DB03707">
    <property type="generic name" value="S-Ethyl-N-Phenyl-Isothiourea"/>
</dbReference>
<dbReference type="DrugBank" id="DB02234">
    <property type="generic name" value="S-Ethylisothiourea"/>
</dbReference>
<dbReference type="DrugBank" id="DB04018">
    <property type="generic name" value="S-Isopropyl-Isothiourea"/>
</dbReference>
<dbReference type="DrugBank" id="DB00360">
    <property type="generic name" value="Sapropterin"/>
</dbReference>
<dbReference type="DrugBank" id="DB02589">
    <property type="generic name" value="Se-Ethyl-Isoselenourea"/>
</dbReference>
<dbReference type="DrugBank" id="DB11815">
    <property type="generic name" value="Tilarginine"/>
</dbReference>
<dbReference type="DrugCentral" id="P29474"/>
<dbReference type="GuidetoPHARMACOLOGY" id="1249"/>
<dbReference type="GlyCosmos" id="P29474">
    <property type="glycosylation" value="1 site, 1 glycan"/>
</dbReference>
<dbReference type="GlyGen" id="P29474">
    <property type="glycosylation" value="8 sites, 2 O-linked glycans (4 sites)"/>
</dbReference>
<dbReference type="iPTMnet" id="P29474"/>
<dbReference type="PhosphoSitePlus" id="P29474"/>
<dbReference type="SwissPalm" id="P29474"/>
<dbReference type="BioMuta" id="NOS3"/>
<dbReference type="DMDM" id="266648"/>
<dbReference type="jPOST" id="P29474"/>
<dbReference type="MassIVE" id="P29474"/>
<dbReference type="PaxDb" id="9606-ENSP00000297494"/>
<dbReference type="PeptideAtlas" id="P29474"/>
<dbReference type="ProteomicsDB" id="20158"/>
<dbReference type="ProteomicsDB" id="54576">
    <molecule id="P29474-1"/>
</dbReference>
<dbReference type="ProteomicsDB" id="54577">
    <molecule id="P29474-2"/>
</dbReference>
<dbReference type="Antibodypedia" id="3692">
    <property type="antibodies" value="1678 antibodies from 44 providers"/>
</dbReference>
<dbReference type="DNASU" id="4846"/>
<dbReference type="Ensembl" id="ENST00000297494.8">
    <molecule id="P29474-1"/>
    <property type="protein sequence ID" value="ENSP00000297494.3"/>
    <property type="gene ID" value="ENSG00000164867.11"/>
</dbReference>
<dbReference type="Ensembl" id="ENST00000467517.1">
    <molecule id="P29474-3"/>
    <property type="protein sequence ID" value="ENSP00000420551.1"/>
    <property type="gene ID" value="ENSG00000164867.11"/>
</dbReference>
<dbReference type="Ensembl" id="ENST00000484524.5">
    <molecule id="P29474-2"/>
    <property type="protein sequence ID" value="ENSP00000420215.1"/>
    <property type="gene ID" value="ENSG00000164867.11"/>
</dbReference>
<dbReference type="GeneID" id="4846"/>
<dbReference type="KEGG" id="hsa:4846"/>
<dbReference type="MANE-Select" id="ENST00000297494.8">
    <property type="protein sequence ID" value="ENSP00000297494.3"/>
    <property type="RefSeq nucleotide sequence ID" value="NM_000603.5"/>
    <property type="RefSeq protein sequence ID" value="NP_000594.2"/>
</dbReference>
<dbReference type="UCSC" id="uc003wif.4">
    <molecule id="P29474-1"/>
    <property type="organism name" value="human"/>
</dbReference>
<dbReference type="AGR" id="HGNC:7876"/>
<dbReference type="CTD" id="4846"/>
<dbReference type="DisGeNET" id="4846"/>
<dbReference type="GeneCards" id="NOS3"/>
<dbReference type="HGNC" id="HGNC:7876">
    <property type="gene designation" value="NOS3"/>
</dbReference>
<dbReference type="HPA" id="ENSG00000164867">
    <property type="expression patterns" value="Tissue enhanced (lymphoid)"/>
</dbReference>
<dbReference type="MalaCards" id="NOS3"/>
<dbReference type="MIM" id="163729">
    <property type="type" value="gene+phenotype"/>
</dbReference>
<dbReference type="neXtProt" id="NX_P29474"/>
<dbReference type="OpenTargets" id="ENSG00000164867"/>
<dbReference type="PharmGKB" id="PA254"/>
<dbReference type="VEuPathDB" id="HostDB:ENSG00000164867"/>
<dbReference type="eggNOG" id="KOG1158">
    <property type="taxonomic scope" value="Eukaryota"/>
</dbReference>
<dbReference type="GeneTree" id="ENSGT00940000161389"/>
<dbReference type="InParanoid" id="P29474"/>
<dbReference type="OMA" id="KGDFRIW"/>
<dbReference type="OrthoDB" id="1856718at2759"/>
<dbReference type="PAN-GO" id="P29474">
    <property type="GO annotations" value="14 GO annotations based on evolutionary models"/>
</dbReference>
<dbReference type="PhylomeDB" id="P29474"/>
<dbReference type="TreeFam" id="TF324410"/>
<dbReference type="BioCyc" id="MetaCyc:HS09149-MONOMER"/>
<dbReference type="BRENDA" id="1.14.13.39">
    <property type="organism ID" value="2681"/>
</dbReference>
<dbReference type="PathwayCommons" id="P29474"/>
<dbReference type="Reactome" id="R-HSA-1222556">
    <property type="pathway name" value="ROS and RNS production in phagocytes"/>
</dbReference>
<dbReference type="Reactome" id="R-HSA-1474151">
    <property type="pathway name" value="Tetrahydrobiopterin (BH4) synthesis, recycling, salvage and regulation"/>
</dbReference>
<dbReference type="Reactome" id="R-HSA-203615">
    <property type="pathway name" value="eNOS activation"/>
</dbReference>
<dbReference type="Reactome" id="R-HSA-203641">
    <property type="pathway name" value="NOSTRIN mediated eNOS trafficking"/>
</dbReference>
<dbReference type="Reactome" id="R-HSA-203754">
    <property type="pathway name" value="NOSIP mediated eNOS trafficking"/>
</dbReference>
<dbReference type="Reactome" id="R-HSA-392154">
    <property type="pathway name" value="Nitric oxide stimulates guanylate cyclase"/>
</dbReference>
<dbReference type="Reactome" id="R-HSA-5218920">
    <property type="pathway name" value="VEGFR2 mediated vascular permeability"/>
</dbReference>
<dbReference type="Reactome" id="R-HSA-9009391">
    <property type="pathway name" value="Extra-nuclear estrogen signaling"/>
</dbReference>
<dbReference type="Reactome" id="R-HSA-9856530">
    <property type="pathway name" value="High laminar flow shear stress activates signaling by PIEZO1 and PECAM1:CDH5:KDR in endothelial cells"/>
</dbReference>
<dbReference type="SignaLink" id="P29474"/>
<dbReference type="SIGNOR" id="P29474"/>
<dbReference type="BioGRID-ORCS" id="4846">
    <property type="hits" value="8 hits in 1170 CRISPR screens"/>
</dbReference>
<dbReference type="ChiTaRS" id="NOS3">
    <property type="organism name" value="human"/>
</dbReference>
<dbReference type="EvolutionaryTrace" id="P29474"/>
<dbReference type="GeneWiki" id="Endothelial_NOS"/>
<dbReference type="GenomeRNAi" id="4846"/>
<dbReference type="Pharos" id="P29474">
    <property type="development level" value="Tchem"/>
</dbReference>
<dbReference type="PRO" id="PR:P29474"/>
<dbReference type="Proteomes" id="UP000005640">
    <property type="component" value="Chromosome 7"/>
</dbReference>
<dbReference type="RNAct" id="P29474">
    <property type="molecule type" value="protein"/>
</dbReference>
<dbReference type="Bgee" id="ENSG00000164867">
    <property type="expression patterns" value="Expressed in spleen and 97 other cell types or tissues"/>
</dbReference>
<dbReference type="ExpressionAtlas" id="P29474">
    <property type="expression patterns" value="baseline and differential"/>
</dbReference>
<dbReference type="GO" id="GO:0005901">
    <property type="term" value="C:caveola"/>
    <property type="evidence" value="ECO:0000314"/>
    <property type="project" value="BHF-UCL"/>
</dbReference>
<dbReference type="GO" id="GO:0005737">
    <property type="term" value="C:cytoplasm"/>
    <property type="evidence" value="ECO:0000314"/>
    <property type="project" value="BHF-UCL"/>
</dbReference>
<dbReference type="GO" id="GO:0005856">
    <property type="term" value="C:cytoskeleton"/>
    <property type="evidence" value="ECO:0007669"/>
    <property type="project" value="UniProtKB-SubCell"/>
</dbReference>
<dbReference type="GO" id="GO:0005829">
    <property type="term" value="C:cytosol"/>
    <property type="evidence" value="ECO:0000318"/>
    <property type="project" value="GO_Central"/>
</dbReference>
<dbReference type="GO" id="GO:0030666">
    <property type="term" value="C:endocytic vesicle membrane"/>
    <property type="evidence" value="ECO:0000304"/>
    <property type="project" value="Reactome"/>
</dbReference>
<dbReference type="GO" id="GO:0005794">
    <property type="term" value="C:Golgi apparatus"/>
    <property type="evidence" value="ECO:0000314"/>
    <property type="project" value="BHF-UCL"/>
</dbReference>
<dbReference type="GO" id="GO:0000139">
    <property type="term" value="C:Golgi membrane"/>
    <property type="evidence" value="ECO:0000304"/>
    <property type="project" value="Reactome"/>
</dbReference>
<dbReference type="GO" id="GO:0005634">
    <property type="term" value="C:nucleus"/>
    <property type="evidence" value="ECO:0000250"/>
    <property type="project" value="BHF-UCL"/>
</dbReference>
<dbReference type="GO" id="GO:0005886">
    <property type="term" value="C:plasma membrane"/>
    <property type="evidence" value="ECO:0000314"/>
    <property type="project" value="BHF-UCL"/>
</dbReference>
<dbReference type="GO" id="GO:0003785">
    <property type="term" value="F:actin monomer binding"/>
    <property type="evidence" value="ECO:0000353"/>
    <property type="project" value="BHF-UCL"/>
</dbReference>
<dbReference type="GO" id="GO:0034618">
    <property type="term" value="F:arginine binding"/>
    <property type="evidence" value="ECO:0000314"/>
    <property type="project" value="BHF-UCL"/>
</dbReference>
<dbReference type="GO" id="GO:0046870">
    <property type="term" value="F:cadmium ion binding"/>
    <property type="evidence" value="ECO:0000303"/>
    <property type="project" value="BHF-UCL"/>
</dbReference>
<dbReference type="GO" id="GO:0005516">
    <property type="term" value="F:calmodulin binding"/>
    <property type="evidence" value="ECO:0000269"/>
    <property type="project" value="Reactome"/>
</dbReference>
<dbReference type="GO" id="GO:0050660">
    <property type="term" value="F:flavin adenine dinucleotide binding"/>
    <property type="evidence" value="ECO:0000318"/>
    <property type="project" value="GO_Central"/>
</dbReference>
<dbReference type="GO" id="GO:0010181">
    <property type="term" value="F:FMN binding"/>
    <property type="evidence" value="ECO:0000318"/>
    <property type="project" value="GO_Central"/>
</dbReference>
<dbReference type="GO" id="GO:0020037">
    <property type="term" value="F:heme binding"/>
    <property type="evidence" value="ECO:0000314"/>
    <property type="project" value="BHF-UCL"/>
</dbReference>
<dbReference type="GO" id="GO:0050661">
    <property type="term" value="F:NADP binding"/>
    <property type="evidence" value="ECO:0000303"/>
    <property type="project" value="BHF-UCL"/>
</dbReference>
<dbReference type="GO" id="GO:0004517">
    <property type="term" value="F:nitric-oxide synthase activity"/>
    <property type="evidence" value="ECO:0000314"/>
    <property type="project" value="UniProtKB"/>
</dbReference>
<dbReference type="GO" id="GO:0097110">
    <property type="term" value="F:scaffold protein binding"/>
    <property type="evidence" value="ECO:0007669"/>
    <property type="project" value="Ensembl"/>
</dbReference>
<dbReference type="GO" id="GO:0016175">
    <property type="term" value="F:superoxide-generating NAD(P)H oxidase activity"/>
    <property type="evidence" value="ECO:0000304"/>
    <property type="project" value="Reactome"/>
</dbReference>
<dbReference type="GO" id="GO:0034617">
    <property type="term" value="F:tetrahydrobiopterin binding"/>
    <property type="evidence" value="ECO:0000314"/>
    <property type="project" value="BHF-UCL"/>
</dbReference>
<dbReference type="GO" id="GO:0001525">
    <property type="term" value="P:angiogenesis"/>
    <property type="evidence" value="ECO:0007669"/>
    <property type="project" value="Ensembl"/>
</dbReference>
<dbReference type="GO" id="GO:0003180">
    <property type="term" value="P:aortic valve morphogenesis"/>
    <property type="evidence" value="ECO:0000250"/>
    <property type="project" value="BHF-UCL"/>
</dbReference>
<dbReference type="GO" id="GO:0006527">
    <property type="term" value="P:arginine catabolic process"/>
    <property type="evidence" value="ECO:0000314"/>
    <property type="project" value="BHF-UCL"/>
</dbReference>
<dbReference type="GO" id="GO:0097746">
    <property type="term" value="P:blood vessel diameter maintenance"/>
    <property type="evidence" value="ECO:0000250"/>
    <property type="project" value="BHF-UCL"/>
</dbReference>
<dbReference type="GO" id="GO:0001974">
    <property type="term" value="P:blood vessel remodeling"/>
    <property type="evidence" value="ECO:0000250"/>
    <property type="project" value="BHF-UCL"/>
</dbReference>
<dbReference type="GO" id="GO:0006816">
    <property type="term" value="P:calcium ion transport"/>
    <property type="evidence" value="ECO:0007669"/>
    <property type="project" value="Ensembl"/>
</dbReference>
<dbReference type="GO" id="GO:0045454">
    <property type="term" value="P:cell redox homeostasis"/>
    <property type="evidence" value="ECO:0000304"/>
    <property type="project" value="Reactome"/>
</dbReference>
<dbReference type="GO" id="GO:0003203">
    <property type="term" value="P:endocardial cushion morphogenesis"/>
    <property type="evidence" value="ECO:0000250"/>
    <property type="project" value="BHF-UCL"/>
</dbReference>
<dbReference type="GO" id="GO:0043542">
    <property type="term" value="P:endothelial cell migration"/>
    <property type="evidence" value="ECO:0000315"/>
    <property type="project" value="BHF-UCL"/>
</dbReference>
<dbReference type="GO" id="GO:0051649">
    <property type="term" value="P:establishment of localization in cell"/>
    <property type="evidence" value="ECO:0007669"/>
    <property type="project" value="Ensembl"/>
</dbReference>
<dbReference type="GO" id="GO:0048873">
    <property type="term" value="P:homeostasis of number of cells within a tissue"/>
    <property type="evidence" value="ECO:0000250"/>
    <property type="project" value="BHF-UCL"/>
</dbReference>
<dbReference type="GO" id="GO:0001701">
    <property type="term" value="P:in utero embryonic development"/>
    <property type="evidence" value="ECO:0007669"/>
    <property type="project" value="Ensembl"/>
</dbReference>
<dbReference type="GO" id="GO:0031663">
    <property type="term" value="P:lipopolysaccharide-mediated signaling pathway"/>
    <property type="evidence" value="ECO:0007669"/>
    <property type="project" value="Ensembl"/>
</dbReference>
<dbReference type="GO" id="GO:0030324">
    <property type="term" value="P:lung development"/>
    <property type="evidence" value="ECO:0007669"/>
    <property type="project" value="Ensembl"/>
</dbReference>
<dbReference type="GO" id="GO:0007005">
    <property type="term" value="P:mitochondrion organization"/>
    <property type="evidence" value="ECO:0000250"/>
    <property type="project" value="BHF-UCL"/>
</dbReference>
<dbReference type="GO" id="GO:0070168">
    <property type="term" value="P:negative regulation of biomineral tissue development"/>
    <property type="evidence" value="ECO:0000250"/>
    <property type="project" value="BHF-UCL"/>
</dbReference>
<dbReference type="GO" id="GO:0045776">
    <property type="term" value="P:negative regulation of blood pressure"/>
    <property type="evidence" value="ECO:0000318"/>
    <property type="project" value="GO_Central"/>
</dbReference>
<dbReference type="GO" id="GO:0051926">
    <property type="term" value="P:negative regulation of calcium ion transport"/>
    <property type="evidence" value="ECO:0007669"/>
    <property type="project" value="Ensembl"/>
</dbReference>
<dbReference type="GO" id="GO:0008285">
    <property type="term" value="P:negative regulation of cell population proliferation"/>
    <property type="evidence" value="ECO:0000250"/>
    <property type="project" value="BHF-UCL"/>
</dbReference>
<dbReference type="GO" id="GO:1902042">
    <property type="term" value="P:negative regulation of extrinsic apoptotic signaling pathway via death domain receptors"/>
    <property type="evidence" value="ECO:0000250"/>
    <property type="project" value="BHF-UCL"/>
</dbReference>
<dbReference type="GO" id="GO:0014740">
    <property type="term" value="P:negative regulation of muscle hyperplasia"/>
    <property type="evidence" value="ECO:0000250"/>
    <property type="project" value="BHF-UCL"/>
</dbReference>
<dbReference type="GO" id="GO:0010544">
    <property type="term" value="P:negative regulation of platelet activation"/>
    <property type="evidence" value="ECO:0000303"/>
    <property type="project" value="BHF-UCL"/>
</dbReference>
<dbReference type="GO" id="GO:0043267">
    <property type="term" value="P:negative regulation of potassium ion transport"/>
    <property type="evidence" value="ECO:0007669"/>
    <property type="project" value="Ensembl"/>
</dbReference>
<dbReference type="GO" id="GO:0048662">
    <property type="term" value="P:negative regulation of smooth muscle cell proliferation"/>
    <property type="evidence" value="ECO:0007669"/>
    <property type="project" value="Ensembl"/>
</dbReference>
<dbReference type="GO" id="GO:0006809">
    <property type="term" value="P:nitric oxide biosynthetic process"/>
    <property type="evidence" value="ECO:0000314"/>
    <property type="project" value="BHF-UCL"/>
</dbReference>
<dbReference type="GO" id="GO:0007263">
    <property type="term" value="P:nitric oxide mediated signal transduction"/>
    <property type="evidence" value="ECO:0000318"/>
    <property type="project" value="GO_Central"/>
</dbReference>
<dbReference type="GO" id="GO:0046209">
    <property type="term" value="P:nitric oxide metabolic process"/>
    <property type="evidence" value="ECO:0000304"/>
    <property type="project" value="Reactome"/>
</dbReference>
<dbReference type="GO" id="GO:0001542">
    <property type="term" value="P:ovulation from ovarian follicle"/>
    <property type="evidence" value="ECO:0007669"/>
    <property type="project" value="Ensembl"/>
</dbReference>
<dbReference type="GO" id="GO:0045766">
    <property type="term" value="P:positive regulation of angiogenesis"/>
    <property type="evidence" value="ECO:0000314"/>
    <property type="project" value="BHF-UCL"/>
</dbReference>
<dbReference type="GO" id="GO:0043536">
    <property type="term" value="P:positive regulation of blood vessel endothelial cell migration"/>
    <property type="evidence" value="ECO:0000314"/>
    <property type="project" value="BHF-UCL"/>
</dbReference>
<dbReference type="GO" id="GO:0010628">
    <property type="term" value="P:positive regulation of gene expression"/>
    <property type="evidence" value="ECO:0000250"/>
    <property type="project" value="BHF-UCL"/>
</dbReference>
<dbReference type="GO" id="GO:0045747">
    <property type="term" value="P:positive regulation of Notch signaling pathway"/>
    <property type="evidence" value="ECO:0000305"/>
    <property type="project" value="BHF-UCL"/>
</dbReference>
<dbReference type="GO" id="GO:0006813">
    <property type="term" value="P:potassium ion transport"/>
    <property type="evidence" value="ECO:0007669"/>
    <property type="project" value="Ensembl"/>
</dbReference>
<dbReference type="GO" id="GO:0003184">
    <property type="term" value="P:pulmonary valve morphogenesis"/>
    <property type="evidence" value="ECO:0000250"/>
    <property type="project" value="BHF-UCL"/>
</dbReference>
<dbReference type="GO" id="GO:0008217">
    <property type="term" value="P:regulation of blood pressure"/>
    <property type="evidence" value="ECO:0000303"/>
    <property type="project" value="BHF-UCL"/>
</dbReference>
<dbReference type="GO" id="GO:0031644">
    <property type="term" value="P:regulation of nervous system process"/>
    <property type="evidence" value="ECO:0000250"/>
    <property type="project" value="ARUK-UCL"/>
</dbReference>
<dbReference type="GO" id="GO:0002028">
    <property type="term" value="P:regulation of sodium ion transport"/>
    <property type="evidence" value="ECO:0007669"/>
    <property type="project" value="Ensembl"/>
</dbReference>
<dbReference type="GO" id="GO:0003100">
    <property type="term" value="P:regulation of systemic arterial blood pressure by endothelin"/>
    <property type="evidence" value="ECO:0000315"/>
    <property type="project" value="BHF-UCL"/>
</dbReference>
<dbReference type="GO" id="GO:0003057">
    <property type="term" value="P:regulation of the force of heart contraction by chemical signal"/>
    <property type="evidence" value="ECO:0007669"/>
    <property type="project" value="Ensembl"/>
</dbReference>
<dbReference type="GO" id="GO:0019430">
    <property type="term" value="P:removal of superoxide radicals"/>
    <property type="evidence" value="ECO:0000314"/>
    <property type="project" value="BHF-UCL"/>
</dbReference>
<dbReference type="GO" id="GO:0034405">
    <property type="term" value="P:response to fluid shear stress"/>
    <property type="evidence" value="ECO:0000270"/>
    <property type="project" value="BHF-UCL"/>
</dbReference>
<dbReference type="GO" id="GO:0009408">
    <property type="term" value="P:response to heat"/>
    <property type="evidence" value="ECO:0000303"/>
    <property type="project" value="BHF-UCL"/>
</dbReference>
<dbReference type="GO" id="GO:0009725">
    <property type="term" value="P:response to hormone"/>
    <property type="evidence" value="ECO:0000318"/>
    <property type="project" value="GO_Central"/>
</dbReference>
<dbReference type="GO" id="GO:0032496">
    <property type="term" value="P:response to lipopolysaccharide"/>
    <property type="evidence" value="ECO:0000318"/>
    <property type="project" value="GO_Central"/>
</dbReference>
<dbReference type="GO" id="GO:0014806">
    <property type="term" value="P:smooth muscle hyperplasia"/>
    <property type="evidence" value="ECO:0000250"/>
    <property type="project" value="BHF-UCL"/>
</dbReference>
<dbReference type="GO" id="GO:0046146">
    <property type="term" value="P:tetrahydrobiopterin metabolic process"/>
    <property type="evidence" value="ECO:0000304"/>
    <property type="project" value="Reactome"/>
</dbReference>
<dbReference type="GO" id="GO:0042311">
    <property type="term" value="P:vasodilation"/>
    <property type="evidence" value="ECO:0000303"/>
    <property type="project" value="BHF-UCL"/>
</dbReference>
<dbReference type="GO" id="GO:0060412">
    <property type="term" value="P:ventricular septum morphogenesis"/>
    <property type="evidence" value="ECO:0007669"/>
    <property type="project" value="Ensembl"/>
</dbReference>
<dbReference type="CDD" id="cd00795">
    <property type="entry name" value="NOS_oxygenase_euk"/>
    <property type="match status" value="1"/>
</dbReference>
<dbReference type="FunFam" id="3.90.440.10:FF:000001">
    <property type="entry name" value="Endothelial nitric oxide synthase"/>
    <property type="match status" value="1"/>
</dbReference>
<dbReference type="FunFam" id="1.20.990.10:FF:000005">
    <property type="entry name" value="Nitric oxide synthase"/>
    <property type="match status" value="1"/>
</dbReference>
<dbReference type="FunFam" id="3.40.50.360:FF:000003">
    <property type="entry name" value="Nitric oxide synthase"/>
    <property type="match status" value="1"/>
</dbReference>
<dbReference type="FunFam" id="3.40.50.80:FF:000003">
    <property type="entry name" value="Nitric oxide synthase"/>
    <property type="match status" value="1"/>
</dbReference>
<dbReference type="FunFam" id="3.90.1230.10:FF:000001">
    <property type="entry name" value="Nitric oxide synthase, brain"/>
    <property type="match status" value="1"/>
</dbReference>
<dbReference type="Gene3D" id="3.40.50.360">
    <property type="match status" value="1"/>
</dbReference>
<dbReference type="Gene3D" id="1.20.990.10">
    <property type="entry name" value="NADPH-cytochrome p450 Reductase, Chain A, domain 3"/>
    <property type="match status" value="1"/>
</dbReference>
<dbReference type="Gene3D" id="3.90.340.10">
    <property type="entry name" value="Nitric Oxide Synthase, Chain A, domain 1"/>
    <property type="match status" value="1"/>
</dbReference>
<dbReference type="Gene3D" id="3.90.1230.10">
    <property type="entry name" value="Nitric Oxide Synthase, Chain A, domain 3"/>
    <property type="match status" value="1"/>
</dbReference>
<dbReference type="Gene3D" id="3.90.440.10">
    <property type="entry name" value="Nitric Oxide Synthase,Heme Domain,Chain A domain 2"/>
    <property type="match status" value="1"/>
</dbReference>
<dbReference type="Gene3D" id="3.40.50.80">
    <property type="entry name" value="Nucleotide-binding domain of ferredoxin-NADP reductase (FNR) module"/>
    <property type="match status" value="1"/>
</dbReference>
<dbReference type="Gene3D" id="2.40.30.10">
    <property type="entry name" value="Translation factors"/>
    <property type="match status" value="1"/>
</dbReference>
<dbReference type="InterPro" id="IPR003097">
    <property type="entry name" value="CysJ-like_FAD-binding"/>
</dbReference>
<dbReference type="InterPro" id="IPR017927">
    <property type="entry name" value="FAD-bd_FR_type"/>
</dbReference>
<dbReference type="InterPro" id="IPR001094">
    <property type="entry name" value="Flavdoxin-like"/>
</dbReference>
<dbReference type="InterPro" id="IPR008254">
    <property type="entry name" value="Flavodoxin/NO_synth"/>
</dbReference>
<dbReference type="InterPro" id="IPR001709">
    <property type="entry name" value="Flavoprot_Pyr_Nucl_cyt_Rdtase"/>
</dbReference>
<dbReference type="InterPro" id="IPR029039">
    <property type="entry name" value="Flavoprotein-like_sf"/>
</dbReference>
<dbReference type="InterPro" id="IPR039261">
    <property type="entry name" value="FNR_nucleotide-bd"/>
</dbReference>
<dbReference type="InterPro" id="IPR023173">
    <property type="entry name" value="NADPH_Cyt_P450_Rdtase_alpha"/>
</dbReference>
<dbReference type="InterPro" id="IPR050607">
    <property type="entry name" value="NOS"/>
</dbReference>
<dbReference type="InterPro" id="IPR044943">
    <property type="entry name" value="NOS_dom_1"/>
</dbReference>
<dbReference type="InterPro" id="IPR044940">
    <property type="entry name" value="NOS_dom_2"/>
</dbReference>
<dbReference type="InterPro" id="IPR044944">
    <property type="entry name" value="NOS_dom_3"/>
</dbReference>
<dbReference type="InterPro" id="IPR012144">
    <property type="entry name" value="NOS_euk"/>
</dbReference>
<dbReference type="InterPro" id="IPR004030">
    <property type="entry name" value="NOS_N"/>
</dbReference>
<dbReference type="InterPro" id="IPR036119">
    <property type="entry name" value="NOS_N_sf"/>
</dbReference>
<dbReference type="InterPro" id="IPR001433">
    <property type="entry name" value="OxRdtase_FAD/NAD-bd"/>
</dbReference>
<dbReference type="InterPro" id="IPR017938">
    <property type="entry name" value="Riboflavin_synthase-like_b-brl"/>
</dbReference>
<dbReference type="PANTHER" id="PTHR43410:SF1">
    <property type="entry name" value="NITRIC OXIDE SYNTHASE"/>
    <property type="match status" value="1"/>
</dbReference>
<dbReference type="PANTHER" id="PTHR43410">
    <property type="entry name" value="NITRIC OXIDE SYNTHASE OXYGENASE"/>
    <property type="match status" value="1"/>
</dbReference>
<dbReference type="Pfam" id="PF00667">
    <property type="entry name" value="FAD_binding_1"/>
    <property type="match status" value="1"/>
</dbReference>
<dbReference type="Pfam" id="PF00258">
    <property type="entry name" value="Flavodoxin_1"/>
    <property type="match status" value="1"/>
</dbReference>
<dbReference type="Pfam" id="PF00175">
    <property type="entry name" value="NAD_binding_1"/>
    <property type="match status" value="1"/>
</dbReference>
<dbReference type="Pfam" id="PF02898">
    <property type="entry name" value="NO_synthase"/>
    <property type="match status" value="1"/>
</dbReference>
<dbReference type="PIRSF" id="PIRSF000333">
    <property type="entry name" value="NOS"/>
    <property type="match status" value="1"/>
</dbReference>
<dbReference type="PRINTS" id="PR00369">
    <property type="entry name" value="FLAVODOXIN"/>
</dbReference>
<dbReference type="PRINTS" id="PR00371">
    <property type="entry name" value="FPNCR"/>
</dbReference>
<dbReference type="SUPFAM" id="SSF52343">
    <property type="entry name" value="Ferredoxin reductase-like, C-terminal NADP-linked domain"/>
    <property type="match status" value="1"/>
</dbReference>
<dbReference type="SUPFAM" id="SSF52218">
    <property type="entry name" value="Flavoproteins"/>
    <property type="match status" value="1"/>
</dbReference>
<dbReference type="SUPFAM" id="SSF56512">
    <property type="entry name" value="Nitric oxide (NO) synthase oxygenase domain"/>
    <property type="match status" value="1"/>
</dbReference>
<dbReference type="SUPFAM" id="SSF63380">
    <property type="entry name" value="Riboflavin synthase domain-like"/>
    <property type="match status" value="1"/>
</dbReference>
<dbReference type="PROSITE" id="PS51384">
    <property type="entry name" value="FAD_FR"/>
    <property type="match status" value="1"/>
</dbReference>
<dbReference type="PROSITE" id="PS50902">
    <property type="entry name" value="FLAVODOXIN_LIKE"/>
    <property type="match status" value="1"/>
</dbReference>
<dbReference type="PROSITE" id="PS60001">
    <property type="entry name" value="NOS"/>
    <property type="match status" value="1"/>
</dbReference>
<proteinExistence type="evidence at protein level"/>
<name>NOS3_HUMAN</name>
<sequence>MGNLKSVAQEPGPPCGLGLGLGLGLCGKQGPATPAPEPSRAPASLLPPAPEHSPPSSPLTQPPEGPKFPRVKNWEVGSITYDTLSAQAQQDGPCTPRRCLGSLVFPRKLQGRPSPGPPAPEQLLSQARDFINQYYSSIKRSGSQAHEQRLQEVEAEVAATGTYQLRESELVFGAKQAWRNAPRCVGRIQWGKLQVFDARDCRSAQEMFTYICNHIKYATNRGNLRSAITVFPQRCPGRGDFRIWNSQLVRYAGYRQQDGSVRGDPANVEITELCIQHGWTPGNGRFDVLPLLLQAPDDPPELFLLPPELVLEVPLEHPTLEWFAALGLRWYALPAVSNMLLEIGGLEFPAAPFSGWYMSTEIGTRNLCDPHRYNILEDVAVCMDLDTRTTSSLWKDKAAVEINVAVLHSYQLAKVTIVDHHAATASFMKHLENEQKARGGCPADWAWIVPPISGSLTPVFHQEMVNYFLSPAFRYQPDPWKGSAAKGTGITRKKTFKEVANAVKISASLMGTVMAKRVKATILYGSETGRAQSYAQQLGRLFRKAFDPRVLCMDEYDVVSLEHETLVLVVTSTFGNGDPPENGESFAAALMEMSGPYNSSPRPEQHKSYKIRFNSISCSDPLVSSWRRKRKESSNTDSAGALGTLRFCVFGLGSRAYPHFCAFARAVDTRLEELGGERLLQLGQGDELCGQEEAFRGWAQAAFQAACETFCVGEDAKAAARDIFSPKRSWKRQRYRLSAQAEGLQLLPGLIHVHRRKMFQATIRSVENLQSSKSTRATILVRLDTGGQEGLQYQPGDHIGVCPPNRPGLVEALLSRVEDPPAPTEPVAVEQLEKGSPGGPPPGWVRDPRLPPCTLRQALTFFLDITSPPSPQLLRLLSTLAEEPREQQELEALSQDPRRYEEWKWFRCPTLLEVLEQFPSVALPAPLLLTQLPLLQPRYYSVSSAPSTHPGEIHLTVAVLAYRTQDGLGPLHYGVCSTWLSQLKPGDPVPCFIRGAPSFRLPPDPSLPCILVGPGTGIAPFRGFWQERLHDIESKGLQPTPMTLVFGCRCSQLDHLYRDEVQNAQQRGVFGRVLTAFSREPDNPKTYVQDILRTELAAEVHRVLCLERGHMFVCGDVTMATNVLQTVQRILATEGDMELDEAGDVIGVLRDQQRYHEDIFGLTLRTQEVTSRIRTQSFSLQERQLRGAVPWAFDPPGSDTNSP</sequence>
<protein>
    <recommendedName>
        <fullName evidence="41">Nitric oxide synthase 3</fullName>
        <ecNumber evidence="16 27">1.14.13.39</ecNumber>
    </recommendedName>
    <alternativeName>
        <fullName>Constitutive NOS</fullName>
        <shortName>cNOS</shortName>
    </alternativeName>
    <alternativeName>
        <fullName>EC-NOS</fullName>
    </alternativeName>
    <alternativeName>
        <fullName>NOS type III</fullName>
        <shortName>NOSIII</shortName>
    </alternativeName>
    <alternativeName>
        <fullName evidence="39">Nitric oxide synthase, endothelial</fullName>
        <shortName evidence="39">Endothelial NOS</shortName>
        <shortName evidence="39">eNOS</shortName>
    </alternativeName>
</protein>
<evidence type="ECO:0000250" key="1"/>
<evidence type="ECO:0000250" key="2">
    <source>
        <dbReference type="UniProtKB" id="P29473"/>
    </source>
</evidence>
<evidence type="ECO:0000250" key="3">
    <source>
        <dbReference type="UniProtKB" id="P29476"/>
    </source>
</evidence>
<evidence type="ECO:0000250" key="4">
    <source>
        <dbReference type="UniProtKB" id="P35228"/>
    </source>
</evidence>
<evidence type="ECO:0000250" key="5">
    <source>
        <dbReference type="UniProtKB" id="P70313"/>
    </source>
</evidence>
<evidence type="ECO:0000255" key="6"/>
<evidence type="ECO:0000255" key="7">
    <source>
        <dbReference type="PROSITE-ProRule" id="PRU00088"/>
    </source>
</evidence>
<evidence type="ECO:0000255" key="8">
    <source>
        <dbReference type="PROSITE-ProRule" id="PRU00716"/>
    </source>
</evidence>
<evidence type="ECO:0000256" key="9">
    <source>
        <dbReference type="SAM" id="MobiDB-lite"/>
    </source>
</evidence>
<evidence type="ECO:0000269" key="10">
    <source>
    </source>
</evidence>
<evidence type="ECO:0000269" key="11">
    <source>
    </source>
</evidence>
<evidence type="ECO:0000269" key="12">
    <source>
    </source>
</evidence>
<evidence type="ECO:0000269" key="13">
    <source>
    </source>
</evidence>
<evidence type="ECO:0000269" key="14">
    <source>
    </source>
</evidence>
<evidence type="ECO:0000269" key="15">
    <source>
    </source>
</evidence>
<evidence type="ECO:0000269" key="16">
    <source>
    </source>
</evidence>
<evidence type="ECO:0000269" key="17">
    <source>
    </source>
</evidence>
<evidence type="ECO:0000269" key="18">
    <source>
    </source>
</evidence>
<evidence type="ECO:0000269" key="19">
    <source>
    </source>
</evidence>
<evidence type="ECO:0000269" key="20">
    <source>
    </source>
</evidence>
<evidence type="ECO:0000269" key="21">
    <source>
    </source>
</evidence>
<evidence type="ECO:0000269" key="22">
    <source>
    </source>
</evidence>
<evidence type="ECO:0000269" key="23">
    <source>
    </source>
</evidence>
<evidence type="ECO:0000269" key="24">
    <source>
    </source>
</evidence>
<evidence type="ECO:0000269" key="25">
    <source>
    </source>
</evidence>
<evidence type="ECO:0000269" key="26">
    <source>
    </source>
</evidence>
<evidence type="ECO:0000269" key="27">
    <source>
    </source>
</evidence>
<evidence type="ECO:0000269" key="28">
    <source>
    </source>
</evidence>
<evidence type="ECO:0000269" key="29">
    <source>
    </source>
</evidence>
<evidence type="ECO:0000269" key="30">
    <source>
    </source>
</evidence>
<evidence type="ECO:0000269" key="31">
    <source>
    </source>
</evidence>
<evidence type="ECO:0000269" key="32">
    <source ref="11"/>
</evidence>
<evidence type="ECO:0000269" key="33">
    <source ref="12"/>
</evidence>
<evidence type="ECO:0000269" key="34">
    <source ref="13"/>
</evidence>
<evidence type="ECO:0000269" key="35">
    <source ref="15"/>
</evidence>
<evidence type="ECO:0000269" key="36">
    <source ref="8"/>
</evidence>
<evidence type="ECO:0000269" key="37">
    <source ref="9"/>
</evidence>
<evidence type="ECO:0000303" key="38">
    <source>
    </source>
</evidence>
<evidence type="ECO:0000305" key="39"/>
<evidence type="ECO:0000305" key="40">
    <source>
    </source>
</evidence>
<evidence type="ECO:0000312" key="41">
    <source>
        <dbReference type="HGNC" id="HGNC:7876"/>
    </source>
</evidence>
<evidence type="ECO:0007744" key="42">
    <source>
        <dbReference type="PDB" id="1M9J"/>
    </source>
</evidence>
<evidence type="ECO:0007744" key="43">
    <source>
        <dbReference type="PDB" id="1M9K"/>
    </source>
</evidence>
<evidence type="ECO:0007744" key="44">
    <source>
        <dbReference type="PDB" id="1M9M"/>
    </source>
</evidence>
<evidence type="ECO:0007744" key="45">
    <source>
        <dbReference type="PDB" id="1M9Q"/>
    </source>
</evidence>
<evidence type="ECO:0007744" key="46">
    <source>
        <dbReference type="PDB" id="1M9R"/>
    </source>
</evidence>
<evidence type="ECO:0007744" key="47">
    <source>
        <dbReference type="PDB" id="3EAH"/>
    </source>
</evidence>
<evidence type="ECO:0007744" key="48">
    <source>
        <dbReference type="PDB" id="3NOS"/>
    </source>
</evidence>
<evidence type="ECO:0007744" key="49">
    <source>
        <dbReference type="PDB" id="4D1O"/>
    </source>
</evidence>
<evidence type="ECO:0007744" key="50">
    <source>
        <dbReference type="PDB" id="4D1P"/>
    </source>
</evidence>
<evidence type="ECO:0007744" key="51">
    <source>
    </source>
</evidence>
<evidence type="ECO:0007744" key="52">
    <source>
    </source>
</evidence>
<evidence type="ECO:0007829" key="53">
    <source>
        <dbReference type="PDB" id="1NIW"/>
    </source>
</evidence>
<evidence type="ECO:0007829" key="54">
    <source>
        <dbReference type="PDB" id="3NOS"/>
    </source>
</evidence>
<evidence type="ECO:0007829" key="55">
    <source>
        <dbReference type="PDB" id="4D1P"/>
    </source>
</evidence>
<evidence type="ECO:0007829" key="56">
    <source>
        <dbReference type="PDB" id="6AV6"/>
    </source>
</evidence>
<evidence type="ECO:0007829" key="57">
    <source>
        <dbReference type="PDB" id="6NH3"/>
    </source>
</evidence>
<evidence type="ECO:0007829" key="58">
    <source>
        <dbReference type="PDB" id="6NH7"/>
    </source>
</evidence>
<evidence type="ECO:0007829" key="59">
    <source>
        <dbReference type="PDB" id="7UAO"/>
    </source>
</evidence>
<evidence type="ECO:0007829" key="60">
    <source>
        <dbReference type="PDB" id="8UFT"/>
    </source>
</evidence>
<feature type="initiator methionine" description="Removed" evidence="2">
    <location>
        <position position="1"/>
    </location>
</feature>
<feature type="chain" id="PRO_0000170943" description="Nitric oxide synthase 3">
    <location>
        <begin position="2"/>
        <end position="1203"/>
    </location>
</feature>
<feature type="domain" description="Flavodoxin-like" evidence="7">
    <location>
        <begin position="520"/>
        <end position="703"/>
    </location>
</feature>
<feature type="domain" description="FAD-binding FR-type" evidence="8">
    <location>
        <begin position="756"/>
        <end position="1002"/>
    </location>
</feature>
<feature type="region of interest" description="Disordered" evidence="9">
    <location>
        <begin position="1"/>
        <end position="71"/>
    </location>
</feature>
<feature type="region of interest" description="Interaction with NOSIP" evidence="11">
    <location>
        <begin position="98"/>
        <end position="486"/>
    </location>
</feature>
<feature type="region of interest" description="Calmodulin-binding" evidence="6">
    <location>
        <begin position="491"/>
        <end position="510"/>
    </location>
</feature>
<feature type="compositionally biased region" description="Gly residues" evidence="9">
    <location>
        <begin position="15"/>
        <end position="27"/>
    </location>
</feature>
<feature type="compositionally biased region" description="Pro residues" evidence="9">
    <location>
        <begin position="33"/>
        <end position="66"/>
    </location>
</feature>
<feature type="binding site" evidence="10 13 23 26 42 43 44 45 46 47 48 49 50">
    <location>
        <position position="94"/>
    </location>
    <ligand>
        <name>Zn(2+)</name>
        <dbReference type="ChEBI" id="CHEBI:29105"/>
        <note>ligand shared between homodimeric partners</note>
    </ligand>
</feature>
<feature type="binding site" evidence="10 13 23 26 42 43 44 45 46 47 48 49 50">
    <location>
        <position position="99"/>
    </location>
    <ligand>
        <name>Zn(2+)</name>
        <dbReference type="ChEBI" id="CHEBI:29105"/>
        <note>ligand shared between homodimeric partners</note>
    </ligand>
</feature>
<feature type="binding site" evidence="26 49">
    <location>
        <position position="102"/>
    </location>
    <ligand>
        <name>(6R)-L-erythro-5,6,7,8-tetrahydrobiopterin</name>
        <dbReference type="ChEBI" id="CHEBI:59560"/>
    </ligand>
</feature>
<feature type="binding site" description="axial binding residue" evidence="26 49">
    <location>
        <position position="184"/>
    </location>
    <ligand>
        <name>heme b</name>
        <dbReference type="ChEBI" id="CHEBI:60344"/>
    </ligand>
    <ligandPart>
        <name>Fe</name>
        <dbReference type="ChEBI" id="CHEBI:18248"/>
    </ligandPart>
</feature>
<feature type="binding site" evidence="26 49">
    <location>
        <position position="247"/>
    </location>
    <ligand>
        <name>L-arginine</name>
        <dbReference type="ChEBI" id="CHEBI:32682"/>
    </ligand>
</feature>
<feature type="binding site" evidence="26 49">
    <location>
        <position position="356"/>
    </location>
    <ligand>
        <name>L-arginine</name>
        <dbReference type="ChEBI" id="CHEBI:32682"/>
    </ligand>
</feature>
<feature type="binding site" evidence="26 49">
    <location>
        <position position="357"/>
    </location>
    <ligand>
        <name>L-arginine</name>
        <dbReference type="ChEBI" id="CHEBI:32682"/>
    </ligand>
</feature>
<feature type="binding site" evidence="26 49">
    <location>
        <position position="361"/>
    </location>
    <ligand>
        <name>L-arginine</name>
        <dbReference type="ChEBI" id="CHEBI:32682"/>
    </ligand>
</feature>
<feature type="binding site" evidence="10 26 48 49 50">
    <location>
        <position position="365"/>
    </location>
    <ligand>
        <name>(6R)-L-erythro-5,6,7,8-tetrahydrobiopterin</name>
        <dbReference type="ChEBI" id="CHEBI:59560"/>
    </ligand>
</feature>
<feature type="binding site" evidence="26 49">
    <location>
        <position position="366"/>
    </location>
    <ligand>
        <name>L-arginine</name>
        <dbReference type="ChEBI" id="CHEBI:32682"/>
    </ligand>
</feature>
<feature type="binding site" evidence="26 49">
    <location>
        <position position="446"/>
    </location>
    <ligand>
        <name>(6R)-L-erythro-5,6,7,8-tetrahydrobiopterin</name>
        <dbReference type="ChEBI" id="CHEBI:59560"/>
    </ligand>
</feature>
<feature type="binding site" evidence="26 49">
    <location>
        <position position="447"/>
    </location>
    <ligand>
        <name>(6R)-L-erythro-5,6,7,8-tetrahydrobiopterin</name>
        <dbReference type="ChEBI" id="CHEBI:59560"/>
    </ligand>
</feature>
<feature type="binding site" evidence="26 49">
    <location>
        <position position="460"/>
    </location>
    <ligand>
        <name>(6R)-L-erythro-5,6,7,8-tetrahydrobiopterin</name>
        <dbReference type="ChEBI" id="CHEBI:59560"/>
    </ligand>
</feature>
<feature type="binding site" evidence="26 49">
    <location>
        <position position="475"/>
    </location>
    <ligand>
        <name>heme b</name>
        <dbReference type="ChEBI" id="CHEBI:60344"/>
    </ligand>
</feature>
<feature type="binding site" evidence="4">
    <location>
        <position position="526"/>
    </location>
    <ligand>
        <name>FMN</name>
        <dbReference type="ChEBI" id="CHEBI:58210"/>
    </ligand>
</feature>
<feature type="binding site" evidence="4">
    <location>
        <position position="527"/>
    </location>
    <ligand>
        <name>FMN</name>
        <dbReference type="ChEBI" id="CHEBI:58210"/>
    </ligand>
</feature>
<feature type="binding site" evidence="4">
    <location>
        <position position="528"/>
    </location>
    <ligand>
        <name>FMN</name>
        <dbReference type="ChEBI" id="CHEBI:58210"/>
    </ligand>
</feature>
<feature type="binding site" evidence="4">
    <location>
        <position position="530"/>
    </location>
    <ligand>
        <name>FMN</name>
        <dbReference type="ChEBI" id="CHEBI:58210"/>
    </ligand>
</feature>
<feature type="binding site" evidence="4">
    <location>
        <position position="572"/>
    </location>
    <ligand>
        <name>FMN</name>
        <dbReference type="ChEBI" id="CHEBI:58210"/>
    </ligand>
</feature>
<feature type="binding site" evidence="4">
    <location>
        <position position="573"/>
    </location>
    <ligand>
        <name>FMN</name>
        <dbReference type="ChEBI" id="CHEBI:58210"/>
    </ligand>
</feature>
<feature type="binding site" evidence="4">
    <location>
        <position position="654"/>
    </location>
    <ligand>
        <name>FMN</name>
        <dbReference type="ChEBI" id="CHEBI:58210"/>
    </ligand>
</feature>
<feature type="binding site" evidence="4">
    <location>
        <position position="661"/>
    </location>
    <ligand>
        <name>FMN</name>
        <dbReference type="ChEBI" id="CHEBI:58210"/>
    </ligand>
</feature>
<feature type="binding site" evidence="4">
    <location>
        <position position="687"/>
    </location>
    <ligand>
        <name>FMN</name>
        <dbReference type="ChEBI" id="CHEBI:58210"/>
    </ligand>
</feature>
<feature type="binding site" evidence="4">
    <location>
        <position position="691"/>
    </location>
    <ligand>
        <name>FMN</name>
        <dbReference type="ChEBI" id="CHEBI:58210"/>
    </ligand>
</feature>
<feature type="binding site" evidence="3">
    <location>
        <position position="776"/>
    </location>
    <ligand>
        <name>NADP(+)</name>
        <dbReference type="ChEBI" id="CHEBI:58349"/>
    </ligand>
</feature>
<feature type="binding site" evidence="3">
    <location>
        <position position="798"/>
    </location>
    <ligand>
        <name>FAD</name>
        <dbReference type="ChEBI" id="CHEBI:57692"/>
    </ligand>
</feature>
<feature type="binding site" evidence="3">
    <location>
        <position position="938"/>
    </location>
    <ligand>
        <name>FAD</name>
        <dbReference type="ChEBI" id="CHEBI:57692"/>
    </ligand>
</feature>
<feature type="binding site" evidence="3">
    <location>
        <position position="940"/>
    </location>
    <ligand>
        <name>FAD</name>
        <dbReference type="ChEBI" id="CHEBI:57692"/>
    </ligand>
</feature>
<feature type="binding site" evidence="3">
    <location>
        <position position="941"/>
    </location>
    <ligand>
        <name>FAD</name>
        <dbReference type="ChEBI" id="CHEBI:57692"/>
    </ligand>
</feature>
<feature type="binding site" evidence="3">
    <location>
        <position position="956"/>
    </location>
    <ligand>
        <name>FAD</name>
        <dbReference type="ChEBI" id="CHEBI:57692"/>
    </ligand>
</feature>
<feature type="binding site" evidence="3">
    <location>
        <position position="958"/>
    </location>
    <ligand>
        <name>FAD</name>
        <dbReference type="ChEBI" id="CHEBI:57692"/>
    </ligand>
</feature>
<feature type="binding site" evidence="3">
    <location>
        <position position="962"/>
    </location>
    <ligand>
        <name>FAD</name>
        <dbReference type="ChEBI" id="CHEBI:57692"/>
    </ligand>
</feature>
<feature type="binding site" evidence="3">
    <location>
        <position position="975"/>
    </location>
    <ligand>
        <name>FAD</name>
        <dbReference type="ChEBI" id="CHEBI:57692"/>
    </ligand>
</feature>
<feature type="binding site" evidence="3">
    <location>
        <position position="976"/>
    </location>
    <ligand>
        <name>FAD</name>
        <dbReference type="ChEBI" id="CHEBI:57692"/>
    </ligand>
</feature>
<feature type="binding site" evidence="3">
    <location>
        <position position="977"/>
    </location>
    <ligand>
        <name>FAD</name>
        <dbReference type="ChEBI" id="CHEBI:57692"/>
    </ligand>
</feature>
<feature type="binding site" evidence="3">
    <location>
        <position position="1016"/>
    </location>
    <ligand>
        <name>NADP(+)</name>
        <dbReference type="ChEBI" id="CHEBI:58349"/>
    </ligand>
</feature>
<feature type="binding site" evidence="3">
    <location>
        <position position="1049"/>
    </location>
    <ligand>
        <name>NADP(+)</name>
        <dbReference type="ChEBI" id="CHEBI:58349"/>
    </ligand>
</feature>
<feature type="binding site" evidence="3">
    <location>
        <position position="1078"/>
    </location>
    <ligand>
        <name>NADP(+)</name>
        <dbReference type="ChEBI" id="CHEBI:58349"/>
    </ligand>
</feature>
<feature type="binding site" evidence="3">
    <location>
        <position position="1079"/>
    </location>
    <ligand>
        <name>NADP(+)</name>
        <dbReference type="ChEBI" id="CHEBI:58349"/>
    </ligand>
</feature>
<feature type="binding site" evidence="3">
    <location>
        <position position="1085"/>
    </location>
    <ligand>
        <name>NADP(+)</name>
        <dbReference type="ChEBI" id="CHEBI:58349"/>
    </ligand>
</feature>
<feature type="binding site" evidence="3">
    <location>
        <position position="1087"/>
    </location>
    <ligand>
        <name>NADP(+)</name>
        <dbReference type="ChEBI" id="CHEBI:58349"/>
    </ligand>
</feature>
<feature type="binding site" evidence="3">
    <location>
        <position position="1089"/>
    </location>
    <ligand>
        <name>NADP(+)</name>
        <dbReference type="ChEBI" id="CHEBI:58349"/>
    </ligand>
</feature>
<feature type="modified residue" description="Phosphothreonine" evidence="52">
    <location>
        <position position="33"/>
    </location>
</feature>
<feature type="modified residue" description="Phosphoserine; by CDK5" evidence="24">
    <location>
        <position position="114"/>
    </location>
</feature>
<feature type="modified residue" description="Phosphothreonine; by AMPK" evidence="20">
    <location>
        <position position="495"/>
    </location>
</feature>
<feature type="modified residue" description="Phosphoserine" evidence="5">
    <location>
        <position position="615"/>
    </location>
</feature>
<feature type="modified residue" description="Phosphoserine" evidence="52">
    <location>
        <position position="633"/>
    </location>
</feature>
<feature type="modified residue" description="Phosphoserine" evidence="52">
    <location>
        <position position="638"/>
    </location>
</feature>
<feature type="modified residue" description="Phosphoserine" evidence="52">
    <location>
        <position position="836"/>
    </location>
</feature>
<feature type="modified residue" description="Phosphothreonine" evidence="5">
    <location>
        <position position="1175"/>
    </location>
</feature>
<feature type="modified residue" description="Phosphoserine; by AMPK" evidence="20 51">
    <location>
        <position position="1177"/>
    </location>
</feature>
<feature type="modified residue" description="Phosphoserine" evidence="5">
    <location>
        <position position="1179"/>
    </location>
</feature>
<feature type="lipid moiety-binding region" description="N-myristoyl glycine" evidence="1">
    <location>
        <position position="2"/>
    </location>
</feature>
<feature type="lipid moiety-binding region" description="S-palmitoyl cysteine" evidence="1">
    <location>
        <position position="15"/>
    </location>
</feature>
<feature type="lipid moiety-binding region" description="S-palmitoyl cysteine" evidence="1">
    <location>
        <position position="26"/>
    </location>
</feature>
<feature type="splice variant" id="VSP_042625" description="In isoform eNOS13C." evidence="38">
    <original>ESFAAALMEMSGPYNSSPRPEQHKSYKIRFNSISCSDPLVSS</original>
    <variation>EGLTLWPRLECSSTITAHCSLNLLDSSNPPTSTSQVVGTTGACHDA</variation>
    <location>
        <begin position="584"/>
        <end position="625"/>
    </location>
</feature>
<feature type="splice variant" id="VSP_045495" description="In isoform eNOS13B." evidence="38">
    <original>SFAAALMEMSGPYNSSPRPEQHKSYKIRFN</original>
    <variation>RWGFAMLPRLVSNSWVQAIHLPRPPKVLRL</variation>
    <location>
        <begin position="585"/>
        <end position="614"/>
    </location>
</feature>
<feature type="splice variant" id="VSP_045496" description="In isoform eNOS13B." evidence="38">
    <location>
        <begin position="615"/>
        <end position="1203"/>
    </location>
</feature>
<feature type="splice variant" id="VSP_042626" description="In isoform eNOS13C." evidence="38">
    <location>
        <begin position="626"/>
        <end position="1203"/>
    </location>
</feature>
<feature type="sequence variant" id="VAR_031218" description="In dbSNP:rs3918166." evidence="33">
    <original>R</original>
    <variation>Q</variation>
    <location>
        <position position="112"/>
    </location>
</feature>
<feature type="sequence variant" id="VAR_008037" description="In dbSNP:rs1799983." evidence="12 15 16 17 18 19 22 29 30 31 32 33 34 35 36 37">
    <original>D</original>
    <variation>E</variation>
    <location>
        <position position="298"/>
    </location>
</feature>
<feature type="sequence variant" id="VAR_036303" description="Found in a colorectal cancer sample; somatic mutation; dbSNP:rs145805216." evidence="21">
    <original>R</original>
    <variation>C</variation>
    <location>
        <position position="474"/>
    </location>
</feature>
<feature type="sequence variant" id="VAR_036304" description="Found in a colorectal cancer sample; somatic mutation; dbSNP:rs145168353." evidence="21">
    <original>R</original>
    <variation>Q</variation>
    <location>
        <position position="602"/>
    </location>
</feature>
<feature type="sequence variant" id="VAR_061377" description="In dbSNP:rs7792133.">
    <original>R</original>
    <variation>H</variation>
    <location>
        <position position="665"/>
    </location>
</feature>
<feature type="sequence variant" id="VAR_031219" description="In dbSNP:rs3918232." evidence="33">
    <original>V</original>
    <variation>M</variation>
    <location>
        <position position="827"/>
    </location>
</feature>
<feature type="sequence variant" id="VAR_031220" description="In dbSNP:rs3918201." evidence="33">
    <original>R</original>
    <variation>M</variation>
    <location>
        <position position="885"/>
    </location>
</feature>
<feature type="sequence variant" id="VAR_031221" description="In dbSNP:rs3918234." evidence="33">
    <original>Q</original>
    <variation>L</variation>
    <location>
        <position position="982"/>
    </location>
</feature>
<feature type="mutagenesis site" description="Reduced nitrite (NO) production." evidence="24">
    <original>S</original>
    <variation>A</variation>
    <location>
        <position position="114"/>
    </location>
</feature>
<feature type="sequence conflict" description="In Ref. 17; AAA36373." evidence="39" ref="17">
    <original>S</original>
    <variation>R</variation>
    <location>
        <position position="53"/>
    </location>
</feature>
<feature type="sequence conflict" description="In Ref. 10; BAG37648." evidence="39" ref="10">
    <original>S</original>
    <variation>G</variation>
    <location>
        <position position="168"/>
    </location>
</feature>
<feature type="sequence conflict" description="In Ref. 10; BAF85617." evidence="39" ref="10">
    <original>K</original>
    <variation>R</variation>
    <location>
        <position position="414"/>
    </location>
</feature>
<feature type="sequence conflict" description="In Ref. 18; AAD14336." evidence="39" ref="18">
    <original>G</original>
    <variation>S</variation>
    <location>
        <position position="489"/>
    </location>
</feature>
<feature type="sequence conflict" description="In Ref. 5; CAA53950." evidence="39" ref="5">
    <original>V</original>
    <variation>W</variation>
    <location>
        <position position="567"/>
    </location>
</feature>
<feature type="sequence conflict" description="In Ref. 6; BAA05652." evidence="39" ref="6">
    <original>R</original>
    <variation>RQ</variation>
    <location>
        <position position="1150"/>
    </location>
</feature>
<feature type="sequence conflict" description="In Ref. 5; CAA53950." evidence="39" ref="5">
    <original>D</original>
    <variation>E</variation>
    <location>
        <position position="1194"/>
    </location>
</feature>
<feature type="strand" evidence="55">
    <location>
        <begin position="70"/>
        <end position="73"/>
    </location>
</feature>
<feature type="turn" evidence="55">
    <location>
        <begin position="74"/>
        <end position="76"/>
    </location>
</feature>
<feature type="strand" evidence="55">
    <location>
        <begin position="79"/>
        <end position="81"/>
    </location>
</feature>
<feature type="helix" evidence="55">
    <location>
        <begin position="84"/>
        <end position="87"/>
    </location>
</feature>
<feature type="strand" evidence="54">
    <location>
        <begin position="88"/>
        <end position="90"/>
    </location>
</feature>
<feature type="strand" evidence="57">
    <location>
        <begin position="104"/>
        <end position="107"/>
    </location>
</feature>
<feature type="helix" evidence="55">
    <location>
        <begin position="120"/>
        <end position="137"/>
    </location>
</feature>
<feature type="strand" evidence="58">
    <location>
        <begin position="141"/>
        <end position="143"/>
    </location>
</feature>
<feature type="helix" evidence="55">
    <location>
        <begin position="144"/>
        <end position="160"/>
    </location>
</feature>
<feature type="helix" evidence="55">
    <location>
        <begin position="167"/>
        <end position="179"/>
    </location>
</feature>
<feature type="helix" evidence="55">
    <location>
        <begin position="187"/>
        <end position="189"/>
    </location>
</feature>
<feature type="strand" evidence="55">
    <location>
        <begin position="194"/>
        <end position="197"/>
    </location>
</feature>
<feature type="helix" evidence="55">
    <location>
        <begin position="204"/>
        <end position="219"/>
    </location>
</feature>
<feature type="helix" evidence="55">
    <location>
        <begin position="220"/>
        <end position="222"/>
    </location>
</feature>
<feature type="strand" evidence="55">
    <location>
        <begin position="227"/>
        <end position="230"/>
    </location>
</feature>
<feature type="strand" evidence="58">
    <location>
        <begin position="236"/>
        <end position="238"/>
    </location>
</feature>
<feature type="strand" evidence="55">
    <location>
        <begin position="245"/>
        <end position="249"/>
    </location>
</feature>
<feature type="strand" evidence="55">
    <location>
        <begin position="253"/>
        <end position="255"/>
    </location>
</feature>
<feature type="strand" evidence="56">
    <location>
        <begin position="257"/>
        <end position="259"/>
    </location>
</feature>
<feature type="strand" evidence="55">
    <location>
        <begin position="261"/>
        <end position="263"/>
    </location>
</feature>
<feature type="helix" evidence="55">
    <location>
        <begin position="265"/>
        <end position="267"/>
    </location>
</feature>
<feature type="helix" evidence="55">
    <location>
        <begin position="268"/>
        <end position="276"/>
    </location>
</feature>
<feature type="strand" evidence="55">
    <location>
        <begin position="284"/>
        <end position="286"/>
    </location>
</feature>
<feature type="strand" evidence="55">
    <location>
        <begin position="291"/>
        <end position="294"/>
    </location>
</feature>
<feature type="strand" evidence="60">
    <location>
        <begin position="296"/>
        <end position="298"/>
    </location>
</feature>
<feature type="strand" evidence="55">
    <location>
        <begin position="301"/>
        <end position="303"/>
    </location>
</feature>
<feature type="helix" evidence="55">
    <location>
        <begin position="307"/>
        <end position="309"/>
    </location>
</feature>
<feature type="strand" evidence="55">
    <location>
        <begin position="312"/>
        <end position="314"/>
    </location>
</feature>
<feature type="helix" evidence="55">
    <location>
        <begin position="323"/>
        <end position="326"/>
    </location>
</feature>
<feature type="strand" evidence="55">
    <location>
        <begin position="329"/>
        <end position="332"/>
    </location>
</feature>
<feature type="strand" evidence="55">
    <location>
        <begin position="340"/>
        <end position="343"/>
    </location>
</feature>
<feature type="strand" evidence="55">
    <location>
        <begin position="346"/>
        <end position="349"/>
    </location>
</feature>
<feature type="helix" evidence="55">
    <location>
        <begin position="359"/>
        <end position="363"/>
    </location>
</feature>
<feature type="helix" evidence="55">
    <location>
        <begin position="365"/>
        <end position="368"/>
    </location>
</feature>
<feature type="turn" evidence="55">
    <location>
        <begin position="370"/>
        <end position="373"/>
    </location>
</feature>
<feature type="helix" evidence="55">
    <location>
        <begin position="376"/>
        <end position="382"/>
    </location>
</feature>
<feature type="helix" evidence="55">
    <location>
        <begin position="390"/>
        <end position="392"/>
    </location>
</feature>
<feature type="helix" evidence="55">
    <location>
        <begin position="394"/>
        <end position="412"/>
    </location>
</feature>
<feature type="helix" evidence="55">
    <location>
        <begin position="420"/>
        <end position="438"/>
    </location>
</feature>
<feature type="helix" evidence="55">
    <location>
        <begin position="445"/>
        <end position="448"/>
    </location>
</feature>
<feature type="strand" evidence="55">
    <location>
        <begin position="451"/>
        <end position="453"/>
    </location>
</feature>
<feature type="helix" evidence="55">
    <location>
        <begin position="454"/>
        <end position="456"/>
    </location>
</feature>
<feature type="helix" evidence="55">
    <location>
        <begin position="458"/>
        <end position="461"/>
    </location>
</feature>
<feature type="strand" evidence="59">
    <location>
        <begin position="465"/>
        <end position="467"/>
    </location>
</feature>
<feature type="strand" evidence="55">
    <location>
        <begin position="470"/>
        <end position="474"/>
    </location>
</feature>
<feature type="helix" evidence="53">
    <location>
        <begin position="496"/>
        <end position="506"/>
    </location>
</feature>
<feature type="helix" evidence="53">
    <location>
        <begin position="507"/>
        <end position="509"/>
    </location>
</feature>
<reference key="1">
    <citation type="journal article" date="1992" name="J. Biol. Chem.">
        <title>Cloning and expression of a cDNA encoding human endothelium-derived relaxing factor/nitric oxide synthase.</title>
        <authorList>
            <person name="Janssens S.P."/>
            <person name="Shimouchi A."/>
            <person name="Quertermous T."/>
            <person name="Bloch D.B."/>
            <person name="Bloch K.D."/>
        </authorList>
    </citation>
    <scope>NUCLEOTIDE SEQUENCE [MRNA] (ISOFORM 1)</scope>
    <scope>VARIANT GLU-298</scope>
    <scope>CATALYTIC ACTIVITY</scope>
    <scope>FUNCTION</scope>
</reference>
<reference key="2">
    <citation type="journal article" date="1992" name="J. Biol. Chem.">
        <authorList>
            <person name="Janssens S.P."/>
            <person name="Shimouchi A."/>
            <person name="Quertermous T."/>
            <person name="Bloch D.B."/>
            <person name="Bloch K.D."/>
        </authorList>
    </citation>
    <scope>ERRATUM OF PUBMED:1378832</scope>
</reference>
<reference key="3">
    <citation type="journal article" date="1992" name="FEBS Lett.">
        <title>Molecular cloning and characterization of human endothelial nitric oxide synthase.</title>
        <authorList>
            <person name="Marsden P.A."/>
            <person name="Schappert K.T."/>
            <person name="Chen H.S."/>
            <person name="Flowers M."/>
            <person name="Sundell C.L."/>
            <person name="Wilcox J.N."/>
            <person name="Lamas S."/>
            <person name="Michel T."/>
        </authorList>
    </citation>
    <scope>NUCLEOTIDE SEQUENCE [MRNA] (ISOFORM 1)</scope>
    <scope>VARIANT GLU-298</scope>
</reference>
<reference key="4">
    <citation type="journal article" date="1993" name="J. Biol. Chem.">
        <title>Structure and chromosomal localization of the human constitutive endothelial nitric oxide synthase gene.</title>
        <authorList>
            <person name="Marsden P.A."/>
            <person name="Heng H.H.Q."/>
            <person name="Scherer S.W."/>
            <person name="Stewart R.J."/>
            <person name="Hall A.V."/>
            <person name="Shi X.-M."/>
            <person name="Tsui L.-C."/>
            <person name="Schappert K.T."/>
        </authorList>
    </citation>
    <scope>NUCLEOTIDE SEQUENCE [GENOMIC DNA]</scope>
    <scope>VARIANT GLU-298</scope>
</reference>
<reference key="5">
    <citation type="journal article" date="1994" name="Biochem. Biophys. Res. Commun.">
        <title>Gene structure, polymorphism and mapping of the human endothelial nitric oxide synthase gene.</title>
        <authorList>
            <person name="Nadaud S.A."/>
            <person name="Bonnardeaux A."/>
            <person name="Lathrop M."/>
            <person name="Soubrier F."/>
        </authorList>
    </citation>
    <scope>NUCLEOTIDE SEQUENCE [GENOMIC DNA]</scope>
    <source>
        <tissue>Placenta</tissue>
    </source>
</reference>
<reference key="6">
    <citation type="journal article" date="1994" name="Eur. J. Biochem.">
        <title>Cloning and structural characterization of the human endothelial nitric-oxide-synthase gene.</title>
        <authorList>
            <person name="Miyahara K."/>
            <person name="Kawamoto T."/>
            <person name="Sase K."/>
            <person name="Yui Y."/>
            <person name="Toda K."/>
            <person name="Yang L.X."/>
            <person name="Hattori R."/>
            <person name="Aoyama T."/>
            <person name="Yamamoto Y."/>
            <person name="Doi Y."/>
            <person name="Ogoshi S."/>
            <person name="Hashimoto K."/>
            <person name="Kawai C."/>
            <person name="Sasayama S."/>
            <person name="Shizuta Y."/>
        </authorList>
    </citation>
    <scope>NUCLEOTIDE SEQUENCE [GENOMIC DNA]</scope>
    <scope>VARIANT GLU-298</scope>
</reference>
<reference key="7">
    <citation type="journal article" date="2007" name="FASEB J.">
        <title>Alternative splicing in intron 13 of the human eNOS gene: a potential mechanism for regulating eNOS activity.</title>
        <authorList>
            <person name="Lorenz M."/>
            <person name="Hewing B."/>
            <person name="Hui J."/>
            <person name="Zepp A."/>
            <person name="Baumann G."/>
            <person name="Bindereif A."/>
            <person name="Stangl V."/>
            <person name="Stangl K."/>
        </authorList>
    </citation>
    <scope>NUCLEOTIDE SEQUENCE [MRNA] (ISOFORMS ENOS13B AND ENOS13C)</scope>
    <scope>ALTERNATIVE SPLICING</scope>
    <scope>FUNCTION (ISOFORM ENOS13C)</scope>
    <scope>VARIANT GLU-298</scope>
</reference>
<reference key="8">
    <citation type="submission" date="1993-12" db="EMBL/GenBank/DDBJ databases">
        <authorList>
            <person name="Liao J.K."/>
        </authorList>
    </citation>
    <scope>NUCLEOTIDE SEQUENCE [GENOMIC DNA]</scope>
    <scope>VARIANT GLU-298</scope>
    <source>
        <tissue>Umbilical vein</tissue>
    </source>
</reference>
<reference key="9">
    <citation type="submission" date="2001-07" db="EMBL/GenBank/DDBJ databases">
        <title>The role of phosphatidylinositol-3-oh kinase in platelet-derived nitric oxide release and platelet disaggregation.</title>
        <authorList>
            <person name="Zhang Y."/>
            <person name="Freedman J.E."/>
        </authorList>
    </citation>
    <scope>NUCLEOTIDE SEQUENCE [MRNA] (ISOFORM 1)</scope>
    <scope>VARIANT GLU-298</scope>
    <source>
        <tissue>Platelet</tissue>
    </source>
</reference>
<reference key="10">
    <citation type="journal article" date="2004" name="Nat. Genet.">
        <title>Complete sequencing and characterization of 21,243 full-length human cDNAs.</title>
        <authorList>
            <person name="Ota T."/>
            <person name="Suzuki Y."/>
            <person name="Nishikawa T."/>
            <person name="Otsuki T."/>
            <person name="Sugiyama T."/>
            <person name="Irie R."/>
            <person name="Wakamatsu A."/>
            <person name="Hayashi K."/>
            <person name="Sato H."/>
            <person name="Nagai K."/>
            <person name="Kimura K."/>
            <person name="Makita H."/>
            <person name="Sekine M."/>
            <person name="Obayashi M."/>
            <person name="Nishi T."/>
            <person name="Shibahara T."/>
            <person name="Tanaka T."/>
            <person name="Ishii S."/>
            <person name="Yamamoto J."/>
            <person name="Saito K."/>
            <person name="Kawai Y."/>
            <person name="Isono Y."/>
            <person name="Nakamura Y."/>
            <person name="Nagahari K."/>
            <person name="Murakami K."/>
            <person name="Yasuda T."/>
            <person name="Iwayanagi T."/>
            <person name="Wagatsuma M."/>
            <person name="Shiratori A."/>
            <person name="Sudo H."/>
            <person name="Hosoiri T."/>
            <person name="Kaku Y."/>
            <person name="Kodaira H."/>
            <person name="Kondo H."/>
            <person name="Sugawara M."/>
            <person name="Takahashi M."/>
            <person name="Kanda K."/>
            <person name="Yokoi T."/>
            <person name="Furuya T."/>
            <person name="Kikkawa E."/>
            <person name="Omura Y."/>
            <person name="Abe K."/>
            <person name="Kamihara K."/>
            <person name="Katsuta N."/>
            <person name="Sato K."/>
            <person name="Tanikawa M."/>
            <person name="Yamazaki M."/>
            <person name="Ninomiya K."/>
            <person name="Ishibashi T."/>
            <person name="Yamashita H."/>
            <person name="Murakawa K."/>
            <person name="Fujimori K."/>
            <person name="Tanai H."/>
            <person name="Kimata M."/>
            <person name="Watanabe M."/>
            <person name="Hiraoka S."/>
            <person name="Chiba Y."/>
            <person name="Ishida S."/>
            <person name="Ono Y."/>
            <person name="Takiguchi S."/>
            <person name="Watanabe S."/>
            <person name="Yosida M."/>
            <person name="Hotuta T."/>
            <person name="Kusano J."/>
            <person name="Kanehori K."/>
            <person name="Takahashi-Fujii A."/>
            <person name="Hara H."/>
            <person name="Tanase T.-O."/>
            <person name="Nomura Y."/>
            <person name="Togiya S."/>
            <person name="Komai F."/>
            <person name="Hara R."/>
            <person name="Takeuchi K."/>
            <person name="Arita M."/>
            <person name="Imose N."/>
            <person name="Musashino K."/>
            <person name="Yuuki H."/>
            <person name="Oshima A."/>
            <person name="Sasaki N."/>
            <person name="Aotsuka S."/>
            <person name="Yoshikawa Y."/>
            <person name="Matsunawa H."/>
            <person name="Ichihara T."/>
            <person name="Shiohata N."/>
            <person name="Sano S."/>
            <person name="Moriya S."/>
            <person name="Momiyama H."/>
            <person name="Satoh N."/>
            <person name="Takami S."/>
            <person name="Terashima Y."/>
            <person name="Suzuki O."/>
            <person name="Nakagawa S."/>
            <person name="Senoh A."/>
            <person name="Mizoguchi H."/>
            <person name="Goto Y."/>
            <person name="Shimizu F."/>
            <person name="Wakebe H."/>
            <person name="Hishigaki H."/>
            <person name="Watanabe T."/>
            <person name="Sugiyama A."/>
            <person name="Takemoto M."/>
            <person name="Kawakami B."/>
            <person name="Yamazaki M."/>
            <person name="Watanabe K."/>
            <person name="Kumagai A."/>
            <person name="Itakura S."/>
            <person name="Fukuzumi Y."/>
            <person name="Fujimori Y."/>
            <person name="Komiyama M."/>
            <person name="Tashiro H."/>
            <person name="Tanigami A."/>
            <person name="Fujiwara T."/>
            <person name="Ono T."/>
            <person name="Yamada K."/>
            <person name="Fujii Y."/>
            <person name="Ozaki K."/>
            <person name="Hirao M."/>
            <person name="Ohmori Y."/>
            <person name="Kawabata A."/>
            <person name="Hikiji T."/>
            <person name="Kobatake N."/>
            <person name="Inagaki H."/>
            <person name="Ikema Y."/>
            <person name="Okamoto S."/>
            <person name="Okitani R."/>
            <person name="Kawakami T."/>
            <person name="Noguchi S."/>
            <person name="Itoh T."/>
            <person name="Shigeta K."/>
            <person name="Senba T."/>
            <person name="Matsumura K."/>
            <person name="Nakajima Y."/>
            <person name="Mizuno T."/>
            <person name="Morinaga M."/>
            <person name="Sasaki M."/>
            <person name="Togashi T."/>
            <person name="Oyama M."/>
            <person name="Hata H."/>
            <person name="Watanabe M."/>
            <person name="Komatsu T."/>
            <person name="Mizushima-Sugano J."/>
            <person name="Satoh T."/>
            <person name="Shirai Y."/>
            <person name="Takahashi Y."/>
            <person name="Nakagawa K."/>
            <person name="Okumura K."/>
            <person name="Nagase T."/>
            <person name="Nomura N."/>
            <person name="Kikuchi H."/>
            <person name="Masuho Y."/>
            <person name="Yamashita R."/>
            <person name="Nakai K."/>
            <person name="Yada T."/>
            <person name="Nakamura Y."/>
            <person name="Ohara O."/>
            <person name="Isogai T."/>
            <person name="Sugano S."/>
        </authorList>
    </citation>
    <scope>NUCLEOTIDE SEQUENCE [LARGE SCALE MRNA] (ISOFORM 1)</scope>
    <scope>VARIANT GLU-298</scope>
    <source>
        <tissue>Hippocampus</tissue>
        <tissue>Trachea</tissue>
    </source>
</reference>
<reference key="11">
    <citation type="submission" date="2005-04" db="EMBL/GenBank/DDBJ databases">
        <authorList>
            <person name="Totoki Y."/>
            <person name="Toyoda A."/>
            <person name="Takeda T."/>
            <person name="Sakaki Y."/>
            <person name="Tanaka A."/>
            <person name="Yokoyama S."/>
        </authorList>
    </citation>
    <scope>NUCLEOTIDE SEQUENCE [LARGE SCALE MRNA] (ISOFORM 1)</scope>
    <scope>VARIANT GLU-298</scope>
    <source>
        <tissue>Spleen</tissue>
    </source>
</reference>
<reference key="12">
    <citation type="submission" date="2002-06" db="EMBL/GenBank/DDBJ databases">
        <authorList>
            <consortium name="SeattleSNPs variation discovery resource"/>
        </authorList>
    </citation>
    <scope>NUCLEOTIDE SEQUENCE [GENOMIC DNA]</scope>
    <scope>VARIANTS GLN-112; GLU-298; MET-827; MET-885 AND LEU-982</scope>
</reference>
<reference key="13">
    <citation type="submission" date="2007-12" db="EMBL/GenBank/DDBJ databases">
        <authorList>
            <consortium name="NHLBI resequencing and genotyping service (RS&amp;G)"/>
        </authorList>
    </citation>
    <scope>NUCLEOTIDE SEQUENCE [GENOMIC DNA]</scope>
    <scope>VARIANT GLU-298</scope>
</reference>
<reference key="14">
    <citation type="journal article" date="2003" name="Nature">
        <title>The DNA sequence of human chromosome 7.</title>
        <authorList>
            <person name="Hillier L.W."/>
            <person name="Fulton R.S."/>
            <person name="Fulton L.A."/>
            <person name="Graves T.A."/>
            <person name="Pepin K.H."/>
            <person name="Wagner-McPherson C."/>
            <person name="Layman D."/>
            <person name="Maas J."/>
            <person name="Jaeger S."/>
            <person name="Walker R."/>
            <person name="Wylie K."/>
            <person name="Sekhon M."/>
            <person name="Becker M.C."/>
            <person name="O'Laughlin M.D."/>
            <person name="Schaller M.E."/>
            <person name="Fewell G.A."/>
            <person name="Delehaunty K.D."/>
            <person name="Miner T.L."/>
            <person name="Nash W.E."/>
            <person name="Cordes M."/>
            <person name="Du H."/>
            <person name="Sun H."/>
            <person name="Edwards J."/>
            <person name="Bradshaw-Cordum H."/>
            <person name="Ali J."/>
            <person name="Andrews S."/>
            <person name="Isak A."/>
            <person name="Vanbrunt A."/>
            <person name="Nguyen C."/>
            <person name="Du F."/>
            <person name="Lamar B."/>
            <person name="Courtney L."/>
            <person name="Kalicki J."/>
            <person name="Ozersky P."/>
            <person name="Bielicki L."/>
            <person name="Scott K."/>
            <person name="Holmes A."/>
            <person name="Harkins R."/>
            <person name="Harris A."/>
            <person name="Strong C.M."/>
            <person name="Hou S."/>
            <person name="Tomlinson C."/>
            <person name="Dauphin-Kohlberg S."/>
            <person name="Kozlowicz-Reilly A."/>
            <person name="Leonard S."/>
            <person name="Rohlfing T."/>
            <person name="Rock S.M."/>
            <person name="Tin-Wollam A.-M."/>
            <person name="Abbott A."/>
            <person name="Minx P."/>
            <person name="Maupin R."/>
            <person name="Strowmatt C."/>
            <person name="Latreille P."/>
            <person name="Miller N."/>
            <person name="Johnson D."/>
            <person name="Murray J."/>
            <person name="Woessner J.P."/>
            <person name="Wendl M.C."/>
            <person name="Yang S.-P."/>
            <person name="Schultz B.R."/>
            <person name="Wallis J.W."/>
            <person name="Spieth J."/>
            <person name="Bieri T.A."/>
            <person name="Nelson J.O."/>
            <person name="Berkowicz N."/>
            <person name="Wohldmann P.E."/>
            <person name="Cook L.L."/>
            <person name="Hickenbotham M.T."/>
            <person name="Eldred J."/>
            <person name="Williams D."/>
            <person name="Bedell J.A."/>
            <person name="Mardis E.R."/>
            <person name="Clifton S.W."/>
            <person name="Chissoe S.L."/>
            <person name="Marra M.A."/>
            <person name="Raymond C."/>
            <person name="Haugen E."/>
            <person name="Gillett W."/>
            <person name="Zhou Y."/>
            <person name="James R."/>
            <person name="Phelps K."/>
            <person name="Iadanoto S."/>
            <person name="Bubb K."/>
            <person name="Simms E."/>
            <person name="Levy R."/>
            <person name="Clendenning J."/>
            <person name="Kaul R."/>
            <person name="Kent W.J."/>
            <person name="Furey T.S."/>
            <person name="Baertsch R.A."/>
            <person name="Brent M.R."/>
            <person name="Keibler E."/>
            <person name="Flicek P."/>
            <person name="Bork P."/>
            <person name="Suyama M."/>
            <person name="Bailey J.A."/>
            <person name="Portnoy M.E."/>
            <person name="Torrents D."/>
            <person name="Chinwalla A.T."/>
            <person name="Gish W.R."/>
            <person name="Eddy S.R."/>
            <person name="McPherson J.D."/>
            <person name="Olson M.V."/>
            <person name="Eichler E.E."/>
            <person name="Green E.D."/>
            <person name="Waterston R.H."/>
            <person name="Wilson R.K."/>
        </authorList>
    </citation>
    <scope>NUCLEOTIDE SEQUENCE [LARGE SCALE GENOMIC DNA]</scope>
    <scope>VARIANT GLU-298</scope>
</reference>
<reference key="15">
    <citation type="submission" date="2005-09" db="EMBL/GenBank/DDBJ databases">
        <authorList>
            <person name="Mural R.J."/>
            <person name="Istrail S."/>
            <person name="Sutton G.G."/>
            <person name="Florea L."/>
            <person name="Halpern A.L."/>
            <person name="Mobarry C.M."/>
            <person name="Lippert R."/>
            <person name="Walenz B."/>
            <person name="Shatkay H."/>
            <person name="Dew I."/>
            <person name="Miller J.R."/>
            <person name="Flanigan M.J."/>
            <person name="Edwards N.J."/>
            <person name="Bolanos R."/>
            <person name="Fasulo D."/>
            <person name="Halldorsson B.V."/>
            <person name="Hannenhalli S."/>
            <person name="Turner R."/>
            <person name="Yooseph S."/>
            <person name="Lu F."/>
            <person name="Nusskern D.R."/>
            <person name="Shue B.C."/>
            <person name="Zheng X.H."/>
            <person name="Zhong F."/>
            <person name="Delcher A.L."/>
            <person name="Huson D.H."/>
            <person name="Kravitz S.A."/>
            <person name="Mouchard L."/>
            <person name="Reinert K."/>
            <person name="Remington K.A."/>
            <person name="Clark A.G."/>
            <person name="Waterman M.S."/>
            <person name="Eichler E.E."/>
            <person name="Adams M.D."/>
            <person name="Hunkapiller M.W."/>
            <person name="Myers E.W."/>
            <person name="Venter J.C."/>
        </authorList>
    </citation>
    <scope>NUCLEOTIDE SEQUENCE [LARGE SCALE GENOMIC DNA]</scope>
    <scope>VARIANT GLU-298</scope>
</reference>
<reference key="16">
    <citation type="journal article" date="2004" name="Genome Res.">
        <title>The status, quality, and expansion of the NIH full-length cDNA project: the Mammalian Gene Collection (MGC).</title>
        <authorList>
            <consortium name="The MGC Project Team"/>
        </authorList>
    </citation>
    <scope>NUCLEOTIDE SEQUENCE [LARGE SCALE MRNA] (ISOFORM 1)</scope>
    <scope>VARIANT GLU-298</scope>
    <source>
        <tissue>Placenta</tissue>
    </source>
</reference>
<reference key="17">
    <citation type="journal article" date="1994" name="Genomics">
        <title>Isolation and chromosomal localization of the human endothelial nitric oxide synthase (NOS3) gene.</title>
        <authorList>
            <person name="Robinson L.J."/>
            <person name="Weremowicz S."/>
            <person name="Morton C.C."/>
            <person name="Michel T."/>
        </authorList>
    </citation>
    <scope>NUCLEOTIDE SEQUENCE [GENOMIC DNA] OF 1-53</scope>
    <source>
        <tissue>Placenta</tissue>
    </source>
</reference>
<reference key="18">
    <citation type="journal article" date="1995" name="Life Sci.">
        <title>Expression of constitutive endothelial nitric oxide synthase in human blood platelets.</title>
        <authorList>
            <person name="Sase K."/>
            <person name="Michel T."/>
        </authorList>
    </citation>
    <scope>NUCLEOTIDE SEQUENCE [MRNA] OF 411-528 (ISOFORM 1/ENOS13C)</scope>
    <source>
        <tissue>Platelet</tissue>
    </source>
</reference>
<reference key="19">
    <citation type="journal article" date="1994" name="Arch. Biochem. Biophys.">
        <title>Purification and characterization of the constitutive nitric oxide synthase from human placenta.</title>
        <authorList>
            <person name="Garvey E.P."/>
            <person name="Tuttle J.V."/>
            <person name="Covington K."/>
            <person name="Merrill B.M."/>
            <person name="Wood E.R."/>
            <person name="Baylis S.A."/>
            <person name="Charles I.G."/>
        </authorList>
    </citation>
    <scope>PROTEIN SEQUENCE OF 167-175; 531-540; 835-845; 876-881; 886-898; 1001-1005 AND 1068-1080</scope>
    <scope>TISSUE SPECIFICITY</scope>
    <source>
        <tissue>Placenta</tissue>
    </source>
</reference>
<reference key="20">
    <citation type="journal article" date="2001" name="FASEB J.">
        <title>NOSIP, a novel modulator of endothelial nitric oxide synthase activity.</title>
        <authorList>
            <person name="Dedio J."/>
            <person name="Koenig P."/>
            <person name="Wohlfart P."/>
            <person name="Schroeder C."/>
            <person name="Kummer W."/>
            <person name="Mueller-Esterl W."/>
        </authorList>
    </citation>
    <scope>INTERACTION WITH NOSIP</scope>
    <scope>ACTIVITY REGULATION</scope>
    <scope>SUBCELLULAR LOCATION</scope>
</reference>
<reference key="21">
    <citation type="journal article" date="2002" name="Proc. Natl. Acad. Sci. U.S.A.">
        <title>NOSTRIN: a protein modulating nitric oxide release and subcellular distribution of endothelial nitric oxide synthase.</title>
        <authorList>
            <person name="Zimmermann K."/>
            <person name="Opitz N."/>
            <person name="Dedio J."/>
            <person name="Renne C."/>
            <person name="Mueller-Esterl W."/>
            <person name="Oess S."/>
        </authorList>
    </citation>
    <scope>INTERACTION WITH NOSTRIN</scope>
    <scope>ACTIVITY REGULATION</scope>
    <scope>SUBCELLULAR LOCATION</scope>
</reference>
<reference key="22">
    <citation type="journal article" date="2005" name="J. Biol. Chem.">
        <title>Endothelial thrombomodulin induces Ca2+ signals and nitric oxide synthesis through epidermal growth factor receptor kinase and calmodulin kinase II.</title>
        <authorList>
            <person name="David-Dufilho M."/>
            <person name="Millanvoye-Van Brussel E."/>
            <person name="Topal G."/>
            <person name="Walch L."/>
            <person name="Brunet A."/>
            <person name="Rendu F."/>
        </authorList>
    </citation>
    <scope>PHOSPHORYLATION AT THR-495 AND SER-1177</scope>
</reference>
<reference key="23">
    <citation type="journal article" date="2005" name="J. Cell Sci.">
        <title>NOSTRIN functions as a homotrimeric adaptor protein facilitating internalization of eNOS.</title>
        <authorList>
            <person name="Icking A."/>
            <person name="Matt S."/>
            <person name="Opitz N."/>
            <person name="Wiesenthal A."/>
            <person name="Mueller-Esterl W."/>
            <person name="Schilling K."/>
        </authorList>
    </citation>
    <scope>SUBCELLULAR LOCATION</scope>
</reference>
<reference key="24">
    <citation type="journal article" date="2005" name="Mol. Cell. Biol.">
        <title>Cell cycle-regulated inactivation of endothelial NO synthase through NOSIP-dependent targeting to the cytoskeleton.</title>
        <authorList>
            <person name="Schleicher M."/>
            <person name="Brundin F."/>
            <person name="Gross S."/>
            <person name="Mueller-Esterl W."/>
            <person name="Oess S."/>
        </authorList>
    </citation>
    <scope>SUBCELLULAR LOCATION</scope>
</reference>
<reference key="25">
    <citation type="journal article" date="2010" name="J. Cell. Biochem.">
        <title>CDK5 phosphorylates eNOS at Ser-113 and regulates NO production.</title>
        <authorList>
            <person name="Lee C.-H."/>
            <person name="Wei Y.-W."/>
            <person name="Huang Y.-T."/>
            <person name="Lin Y.-T."/>
            <person name="Lee Y.-C."/>
            <person name="Lee K.-H."/>
            <person name="Lu P.-J."/>
        </authorList>
    </citation>
    <scope>PHOSPHORYLATION AT SER-114</scope>
    <scope>MUTAGENESIS OF SER-114</scope>
</reference>
<reference key="26">
    <citation type="journal article" date="2013" name="Am. J. Physiol.">
        <title>LPS induces pp60c-src-mediated tyrosine phosphorylation of Hsp90 in lung vascular endothelial cells and mouse lung.</title>
        <authorList>
            <person name="Barabutis N."/>
            <person name="Handa V."/>
            <person name="Dimitropoulou C."/>
            <person name="Rafikov R."/>
            <person name="Snead C."/>
            <person name="Kumar S."/>
            <person name="Joshi A."/>
            <person name="Thangjam G."/>
            <person name="Fulton D."/>
            <person name="Black S.M."/>
            <person name="Patel V."/>
            <person name="Catravas J.D."/>
        </authorList>
    </citation>
    <scope>INTERACTION WITH HSP90AB1</scope>
</reference>
<reference key="27">
    <citation type="journal article" date="2013" name="J. Proteome Res.">
        <title>Toward a comprehensive characterization of a human cancer cell phosphoproteome.</title>
        <authorList>
            <person name="Zhou H."/>
            <person name="Di Palma S."/>
            <person name="Preisinger C."/>
            <person name="Peng M."/>
            <person name="Polat A.N."/>
            <person name="Heck A.J."/>
            <person name="Mohammed S."/>
        </authorList>
    </citation>
    <scope>PHOSPHORYLATION [LARGE SCALE ANALYSIS] AT SER-1177</scope>
    <scope>IDENTIFICATION BY MASS SPECTROMETRY [LARGE SCALE ANALYSIS]</scope>
    <source>
        <tissue>Erythroleukemia</tissue>
    </source>
</reference>
<reference key="28">
    <citation type="journal article" date="2014" name="J. Proteomics">
        <title>An enzyme assisted RP-RPLC approach for in-depth analysis of human liver phosphoproteome.</title>
        <authorList>
            <person name="Bian Y."/>
            <person name="Song C."/>
            <person name="Cheng K."/>
            <person name="Dong M."/>
            <person name="Wang F."/>
            <person name="Huang J."/>
            <person name="Sun D."/>
            <person name="Wang L."/>
            <person name="Ye M."/>
            <person name="Zou H."/>
        </authorList>
    </citation>
    <scope>PHOSPHORYLATION [LARGE SCALE ANALYSIS] AT THR-33; SER-633; SER-638 AND SER-836</scope>
    <scope>IDENTIFICATION BY MASS SPECTROMETRY [LARGE SCALE ANALYSIS]</scope>
    <source>
        <tissue>Liver</tissue>
    </source>
</reference>
<reference key="29">
    <citation type="journal article" date="2022" name="Bioorg. Med. Chem.">
        <title>2-Aminopyridines with a shortened amino sidechain as potent, selective, and highly permeable human neuronal nitric oxide synthase inhibitors.</title>
        <authorList>
            <person name="Vasu D."/>
            <person name="Li H."/>
            <person name="Hardy C.D."/>
            <person name="Poulos T.L."/>
            <person name="Silverman R.B."/>
        </authorList>
    </citation>
    <scope>CATALYTIC ACTIVITY</scope>
</reference>
<reference evidence="48" key="30">
    <citation type="journal article" date="1999" name="Nat. Struct. Biol.">
        <title>Structural characterization of nitric oxide synthase isoforms reveals striking active-site conservation.</title>
        <authorList>
            <person name="Fischmann T.O."/>
            <person name="Hruza A."/>
            <person name="Niu X.D."/>
            <person name="Fossetta J.D."/>
            <person name="Lunn C.A."/>
            <person name="Dolphin E."/>
            <person name="Prongay A.J."/>
            <person name="Reichert P."/>
            <person name="Lundell D.J."/>
            <person name="Narula S.K."/>
            <person name="Weber P.C."/>
        </authorList>
    </citation>
    <scope>X-RAY CRYSTALLOGRAPHY (2.4 ANGSTROMS) IN COMPLEX WITH (6R)-L-ERYTHRO-5,6,7,8-TETRAHYDROBIOPTERIN AND ZINC</scope>
</reference>
<reference evidence="42 43 44 45 46" key="31">
    <citation type="journal article" date="2002" name="Biochemistry">
        <title>Conformational changes in nitric oxide synthases induced by chlorzoxazone and nitroindazoles: crystallographic and computational analyses of inhibitor potency.</title>
        <authorList>
            <person name="Rosenfeld R.J."/>
            <person name="Garcin E.D."/>
            <person name="Panda K."/>
            <person name="Andersson G."/>
            <person name="Aberg A."/>
            <person name="Wallace A.V."/>
            <person name="Morris G.M."/>
            <person name="Olson A.J."/>
            <person name="Stuehr D.J."/>
            <person name="Tainer J.A."/>
            <person name="Getzoff E.D."/>
        </authorList>
    </citation>
    <scope>X-RAY CRYSTALLOGRAPHY (1.96 ANGSTROMS) OF 67-480 IN COMPLEX WITH HEME B AND ZINC</scope>
</reference>
<reference evidence="47" key="32">
    <citation type="journal article" date="2008" name="Nat. Chem. Biol.">
        <title>Anchored plasticity opens doors for selective inhibitor design in nitric oxide synthase.</title>
        <authorList>
            <person name="Garcin E.D."/>
            <person name="Arvai A.S."/>
            <person name="Rosenfeld R.J."/>
            <person name="Kroeger M.D."/>
            <person name="Crane B.R."/>
            <person name="Andersson G."/>
            <person name="Andrews G."/>
            <person name="Hamley P.J."/>
            <person name="Mallinder P.R."/>
            <person name="Nicholls D.J."/>
            <person name="St-Gallay S.A."/>
            <person name="Tinker A.C."/>
            <person name="Gensmantel N.P."/>
            <person name="Mete A."/>
            <person name="Cheshire D.R."/>
            <person name="Connolly S."/>
            <person name="Stuehr D.J."/>
            <person name="Aberg A."/>
            <person name="Wallace A.V."/>
            <person name="Tainer J.A."/>
            <person name="Getzoff E.D."/>
        </authorList>
    </citation>
    <scope>X-RAY CRYSTALLOGRAPHY (2.44 ANGSTROMS) OF 66-492 IN COMPLEX WITH HEME AND ZINC</scope>
</reference>
<reference evidence="49 50" key="33">
    <citation type="journal article" date="2014" name="Acta Crystallogr. D">
        <title>Structures of human constitutive nitric oxide synthases.</title>
        <authorList>
            <person name="Li H."/>
            <person name="Jamal J."/>
            <person name="Plaza C."/>
            <person name="Pineda S.H."/>
            <person name="Chreifi G."/>
            <person name="Jing Q."/>
            <person name="Cinelli M.A."/>
            <person name="Silverman R.B."/>
            <person name="Poulos T.L."/>
        </authorList>
    </citation>
    <scope>X-RAY CRYSTALLOGRAPHY (2.03 ANGSTROMS) OF 302-721 IN COMPLEXES WITH 5,6,7,8-TETRAHYDROBIOPTERIN; L-ARGININE; HEME; ZINC AND AN AMINOPYRIDINE INHIBITOR</scope>
    <scope>COFACTOR</scope>
</reference>
<reference key="34">
    <citation type="journal article" date="1998" name="Hum. Genet.">
        <title>A missense Glu298Asp variant in the endothelial nitric oxide synthase gene is associated with coronary spasm in the Japanese.</title>
        <authorList>
            <person name="Yoshimura M."/>
            <person name="Yasue H."/>
            <person name="Nakayama M."/>
            <person name="Shimasaki Y."/>
            <person name="Sumida H."/>
            <person name="Sugiyama S."/>
            <person name="Kugiyama K."/>
            <person name="Ogawa H."/>
            <person name="Ogawa Y."/>
            <person name="Saito Y."/>
            <person name="Miyamoto Y."/>
            <person name="Nakao K."/>
        </authorList>
    </citation>
    <scope>VARIANT GLU-298</scope>
    <scope>POSSIBLE INVOLVEMENT IN SUSCEPTIBILITY TO CORONARY SPASM</scope>
</reference>
<reference key="35">
    <citation type="journal article" date="2001" name="Pharmacogenetics">
        <title>In-vivo effects of Glu298Asp endothelial nitric oxide synthase polymorphism.</title>
        <authorList>
            <person name="Sofowora G."/>
            <person name="Dishy V."/>
            <person name="Xie H.G."/>
            <person name="Imamura H."/>
            <person name="Nishimi Y."/>
            <person name="Morales C.R."/>
            <person name="Morrow J.D."/>
            <person name="Kim R.B."/>
            <person name="Stein C.M."/>
            <person name="Wood A.J."/>
        </authorList>
    </citation>
    <scope>VARIANT GLU-298</scope>
    <scope>POSSIBLE INVOLVEMENT IN SUSCEPTIBILITY TO CORONARY SPASM</scope>
</reference>
<reference key="36">
    <citation type="journal article" date="2006" name="Science">
        <title>The consensus coding sequences of human breast and colorectal cancers.</title>
        <authorList>
            <person name="Sjoeblom T."/>
            <person name="Jones S."/>
            <person name="Wood L.D."/>
            <person name="Parsons D.W."/>
            <person name="Lin J."/>
            <person name="Barber T.D."/>
            <person name="Mandelker D."/>
            <person name="Leary R.J."/>
            <person name="Ptak J."/>
            <person name="Silliman N."/>
            <person name="Szabo S."/>
            <person name="Buckhaults P."/>
            <person name="Farrell C."/>
            <person name="Meeh P."/>
            <person name="Markowitz S.D."/>
            <person name="Willis J."/>
            <person name="Dawson D."/>
            <person name="Willson J.K.V."/>
            <person name="Gazdar A.F."/>
            <person name="Hartigan J."/>
            <person name="Wu L."/>
            <person name="Liu C."/>
            <person name="Parmigiani G."/>
            <person name="Park B.H."/>
            <person name="Bachman K.E."/>
            <person name="Papadopoulos N."/>
            <person name="Vogelstein B."/>
            <person name="Kinzler K.W."/>
            <person name="Velculescu V.E."/>
        </authorList>
    </citation>
    <scope>VARIANTS [LARGE SCALE ANALYSIS] CYS-474 AND GLN-602</scope>
</reference>